<protein>
    <recommendedName>
        <fullName evidence="81">Breast cancer type 2 susceptibility protein</fullName>
    </recommendedName>
    <alternativeName>
        <fullName>Fanconi anemia group D1 protein</fullName>
    </alternativeName>
</protein>
<proteinExistence type="evidence at protein level"/>
<accession>P51587</accession>
<accession>O00183</accession>
<accession>O15008</accession>
<accession>Q13879</accession>
<accession>Q5TBJ7</accession>
<gene>
    <name evidence="83" type="primary">BRCA2</name>
    <name type="synonym">FACD</name>
    <name type="synonym">FANCD1</name>
</gene>
<name>BRCA2_HUMAN</name>
<evidence type="ECO:0000250" key="1">
    <source>
        <dbReference type="UniProtKB" id="P97929"/>
    </source>
</evidence>
<evidence type="ECO:0000256" key="2">
    <source>
        <dbReference type="SAM" id="MobiDB-lite"/>
    </source>
</evidence>
<evidence type="ECO:0000269" key="3">
    <source>
    </source>
</evidence>
<evidence type="ECO:0000269" key="4">
    <source>
    </source>
</evidence>
<evidence type="ECO:0000269" key="5">
    <source>
    </source>
</evidence>
<evidence type="ECO:0000269" key="6">
    <source>
    </source>
</evidence>
<evidence type="ECO:0000269" key="7">
    <source>
    </source>
</evidence>
<evidence type="ECO:0000269" key="8">
    <source>
    </source>
</evidence>
<evidence type="ECO:0000269" key="9">
    <source>
    </source>
</evidence>
<evidence type="ECO:0000269" key="10">
    <source>
    </source>
</evidence>
<evidence type="ECO:0000269" key="11">
    <source>
    </source>
</evidence>
<evidence type="ECO:0000269" key="12">
    <source>
    </source>
</evidence>
<evidence type="ECO:0000269" key="13">
    <source>
    </source>
</evidence>
<evidence type="ECO:0000269" key="14">
    <source>
    </source>
</evidence>
<evidence type="ECO:0000269" key="15">
    <source>
    </source>
</evidence>
<evidence type="ECO:0000269" key="16">
    <source>
    </source>
</evidence>
<evidence type="ECO:0000269" key="17">
    <source>
    </source>
</evidence>
<evidence type="ECO:0000269" key="18">
    <source>
    </source>
</evidence>
<evidence type="ECO:0000269" key="19">
    <source>
    </source>
</evidence>
<evidence type="ECO:0000269" key="20">
    <source>
    </source>
</evidence>
<evidence type="ECO:0000269" key="21">
    <source>
    </source>
</evidence>
<evidence type="ECO:0000269" key="22">
    <source>
    </source>
</evidence>
<evidence type="ECO:0000269" key="23">
    <source>
    </source>
</evidence>
<evidence type="ECO:0000269" key="24">
    <source>
    </source>
</evidence>
<evidence type="ECO:0000269" key="25">
    <source>
    </source>
</evidence>
<evidence type="ECO:0000269" key="26">
    <source>
    </source>
</evidence>
<evidence type="ECO:0000269" key="27">
    <source>
    </source>
</evidence>
<evidence type="ECO:0000269" key="28">
    <source>
    </source>
</evidence>
<evidence type="ECO:0000269" key="29">
    <source>
    </source>
</evidence>
<evidence type="ECO:0000269" key="30">
    <source>
    </source>
</evidence>
<evidence type="ECO:0000269" key="31">
    <source>
    </source>
</evidence>
<evidence type="ECO:0000269" key="32">
    <source>
    </source>
</evidence>
<evidence type="ECO:0000269" key="33">
    <source>
    </source>
</evidence>
<evidence type="ECO:0000269" key="34">
    <source>
    </source>
</evidence>
<evidence type="ECO:0000269" key="35">
    <source>
    </source>
</evidence>
<evidence type="ECO:0000269" key="36">
    <source>
    </source>
</evidence>
<evidence type="ECO:0000269" key="37">
    <source>
    </source>
</evidence>
<evidence type="ECO:0000269" key="38">
    <source>
    </source>
</evidence>
<evidence type="ECO:0000269" key="39">
    <source>
    </source>
</evidence>
<evidence type="ECO:0000269" key="40">
    <source>
    </source>
</evidence>
<evidence type="ECO:0000269" key="41">
    <source>
    </source>
</evidence>
<evidence type="ECO:0000269" key="42">
    <source>
    </source>
</evidence>
<evidence type="ECO:0000269" key="43">
    <source>
    </source>
</evidence>
<evidence type="ECO:0000269" key="44">
    <source>
    </source>
</evidence>
<evidence type="ECO:0000269" key="45">
    <source>
    </source>
</evidence>
<evidence type="ECO:0000269" key="46">
    <source>
    </source>
</evidence>
<evidence type="ECO:0000269" key="47">
    <source>
    </source>
</evidence>
<evidence type="ECO:0000269" key="48">
    <source>
    </source>
</evidence>
<evidence type="ECO:0000269" key="49">
    <source>
    </source>
</evidence>
<evidence type="ECO:0000269" key="50">
    <source>
    </source>
</evidence>
<evidence type="ECO:0000269" key="51">
    <source>
    </source>
</evidence>
<evidence type="ECO:0000269" key="52">
    <source>
    </source>
</evidence>
<evidence type="ECO:0000269" key="53">
    <source>
    </source>
</evidence>
<evidence type="ECO:0000269" key="54">
    <source>
    </source>
</evidence>
<evidence type="ECO:0000269" key="55">
    <source>
    </source>
</evidence>
<evidence type="ECO:0000269" key="56">
    <source>
    </source>
</evidence>
<evidence type="ECO:0000269" key="57">
    <source>
    </source>
</evidence>
<evidence type="ECO:0000269" key="58">
    <source>
    </source>
</evidence>
<evidence type="ECO:0000269" key="59">
    <source>
    </source>
</evidence>
<evidence type="ECO:0000269" key="60">
    <source>
    </source>
</evidence>
<evidence type="ECO:0000269" key="61">
    <source>
    </source>
</evidence>
<evidence type="ECO:0000269" key="62">
    <source>
    </source>
</evidence>
<evidence type="ECO:0000269" key="63">
    <source>
    </source>
</evidence>
<evidence type="ECO:0000269" key="64">
    <source>
    </source>
</evidence>
<evidence type="ECO:0000269" key="65">
    <source>
    </source>
</evidence>
<evidence type="ECO:0000269" key="66">
    <source>
    </source>
</evidence>
<evidence type="ECO:0000269" key="67">
    <source>
    </source>
</evidence>
<evidence type="ECO:0000269" key="68">
    <source>
    </source>
</evidence>
<evidence type="ECO:0000269" key="69">
    <source>
    </source>
</evidence>
<evidence type="ECO:0000269" key="70">
    <source>
    </source>
</evidence>
<evidence type="ECO:0000269" key="71">
    <source>
    </source>
</evidence>
<evidence type="ECO:0000269" key="72">
    <source>
    </source>
</evidence>
<evidence type="ECO:0000269" key="73">
    <source>
    </source>
</evidence>
<evidence type="ECO:0000269" key="74">
    <source>
    </source>
</evidence>
<evidence type="ECO:0000269" key="75">
    <source>
    </source>
</evidence>
<evidence type="ECO:0000269" key="76">
    <source>
    </source>
</evidence>
<evidence type="ECO:0000269" key="77">
    <source>
    </source>
</evidence>
<evidence type="ECO:0000269" key="78">
    <source>
    </source>
</evidence>
<evidence type="ECO:0000269" key="79">
    <source>
    </source>
</evidence>
<evidence type="ECO:0000269" key="80">
    <source ref="3"/>
</evidence>
<evidence type="ECO:0000305" key="81"/>
<evidence type="ECO:0000305" key="82">
    <source>
    </source>
</evidence>
<evidence type="ECO:0000312" key="83">
    <source>
        <dbReference type="HGNC" id="HGNC:1101"/>
    </source>
</evidence>
<evidence type="ECO:0007744" key="84">
    <source>
    </source>
</evidence>
<evidence type="ECO:0007744" key="85">
    <source>
    </source>
</evidence>
<evidence type="ECO:0007829" key="86">
    <source>
        <dbReference type="PDB" id="1N0W"/>
    </source>
</evidence>
<evidence type="ECO:0007829" key="87">
    <source>
        <dbReference type="PDB" id="3EU7"/>
    </source>
</evidence>
<evidence type="ECO:0007829" key="88">
    <source>
        <dbReference type="PDB" id="6GY2"/>
    </source>
</evidence>
<evidence type="ECO:0007829" key="89">
    <source>
        <dbReference type="PDB" id="6HQU"/>
    </source>
</evidence>
<evidence type="ECO:0007829" key="90">
    <source>
        <dbReference type="PDB" id="7LDG"/>
    </source>
</evidence>
<evidence type="ECO:0007829" key="91">
    <source>
        <dbReference type="PDB" id="8BR9"/>
    </source>
</evidence>
<evidence type="ECO:0007829" key="92">
    <source>
        <dbReference type="PDB" id="8C3J"/>
    </source>
</evidence>
<evidence type="ECO:0007829" key="93">
    <source>
        <dbReference type="PDB" id="8C3N"/>
    </source>
</evidence>
<organism>
    <name type="scientific">Homo sapiens</name>
    <name type="common">Human</name>
    <dbReference type="NCBI Taxonomy" id="9606"/>
    <lineage>
        <taxon>Eukaryota</taxon>
        <taxon>Metazoa</taxon>
        <taxon>Chordata</taxon>
        <taxon>Craniata</taxon>
        <taxon>Vertebrata</taxon>
        <taxon>Euteleostomi</taxon>
        <taxon>Mammalia</taxon>
        <taxon>Eutheria</taxon>
        <taxon>Euarchontoglires</taxon>
        <taxon>Primates</taxon>
        <taxon>Haplorrhini</taxon>
        <taxon>Catarrhini</taxon>
        <taxon>Hominidae</taxon>
        <taxon>Homo</taxon>
    </lineage>
</organism>
<comment type="function">
    <text evidence="32 34 39 48 52 53 54 55 57 61 62">Involved in double-strand break repair and/or homologous recombination. Binds RAD51 and potentiates recombinational DNA repair by promoting assembly of RAD51 onto single-stranded DNA (ssDNA). Acts by targeting RAD51 to ssDNA over double-stranded DNA, enabling RAD51 to displace replication protein-A (RPA) from ssDNA and stabilizing RAD51-ssDNA filaments by blocking ATP hydrolysis. Part of a PALB2-scaffolded HR complex containing RAD51C and which is thought to play a role in DNA repair by HR. May participate in S phase checkpoint activation. Binds selectively to ssDNA, and to ssDNA in tailed duplexes and replication fork structures. May play a role in the extension step after strand invasion at replication-dependent DNA double-strand breaks; together with PALB2 is involved in both POLH localization at collapsed replication forks and DNA polymerization activity. In concert with NPM1, regulates centrosome duplication. Interacts with the TREX-2 complex (transcription and export complex 2) subunits PCID2 and SEM1, and is required to prevent R-loop-associated DNA damage and thus transcription-associated genomic instability. Silencing of BRCA2 promotes R-loop accumulation at actively transcribed genes in replicating and non-replicating cells, suggesting that BRCA2 mediates the control of R-loop associated genomic instability, independently of its known role in homologous recombination (PubMed:24896180).</text>
</comment>
<comment type="subunit">
    <text evidence="1 4 19 32 34 36 41 42 43 44 47 48 49 50 52 53 54 55 57 59 60 61 62 64 65 68">Monomer and dimer (PubMed:20729858). Interacts with RAD51; regulates RAD51 recruitment and function at sites of DNA repair (PubMed:12442171, PubMed:15800615, PubMed:18317453, PubMed:20729832, PubMed:20729859). Interacts with WDR16, USP11, DMC1, ROCK2 and NPM1 (PubMed:15314155, PubMed:15967112, PubMed:20729832, PubMed:21084279). Interacts with SEM1; the interaction masks a nuclear export signal in BRCA2 (PubMed:10373512, PubMed:16205630, PubMed:21719596, PubMed:24013206). Interacts with both nonubiquitinated and monoubiquitinated FANCD2; this complex also includes XRCC3 and phosphorylated FANCG (PubMed:15115758, PubMed:15199141, PubMed:18212739). Part of a BRCA complex containing BRCA1, BRCA2 and PALB2 (PubMed:19369211). Component of the homologous recombination repair (HR) complex composed of ERCC5/XPG, BRCA2, PALB2, DSS1 and RAD51 (PubMed:26833090). Within the complex, interacts with ERCC5/XPG and PALB2 (PubMed:26833090). Interacts directly with PALB2 which may serve as a scaffold for a HR complex containing PALB2, BRCA2, RAD51C, RAD51 and XRCC3 (PubMed:16793542, PubMed:19369211, PubMed:19609323, PubMed:24141787, PubMed:26833090, PubMed:28319063). Interacts with BRCA1 only in the presence of PALB2 which serves as the bridging protein (PubMed:19369211). Interacts with POLH; the interaction is direct (PubMed:24485656). Interacts with the TREX-2 complex subunits PCID2 and SEM1 (PubMed:21719596, PubMed:24896180). Interacts with HSF2BP and BRME1; the interaction with HSF2BP is direct and allows the formation of a ternary complex (PubMed:31242413). The complex BRME1:HSF2BP:BRCA2 interacts with SPATA22, MEIOB and RAD51 (By similarity).</text>
</comment>
<comment type="interaction">
    <interactant intactId="EBI-79792">
        <id>P51587</id>
    </interactant>
    <interactant intactId="EBI-79792">
        <id>P51587</id>
        <label>BRCA2</label>
    </interactant>
    <organismsDiffer>false</organismsDiffer>
    <experiments>3</experiments>
</comment>
<comment type="interaction">
    <interactant intactId="EBI-79792">
        <id>P51587</id>
    </interactant>
    <interactant intactId="EBI-930865">
        <id>Q14565</id>
        <label>DMC1</label>
    </interactant>
    <organismsDiffer>false</organismsDiffer>
    <experiments>12</experiments>
</comment>
<comment type="interaction">
    <interactant intactId="EBI-79792">
        <id>P51587</id>
    </interactant>
    <interactant intactId="EBI-359343">
        <id>Q9BXW9</id>
        <label>FANCD2</label>
    </interactant>
    <organismsDiffer>false</organismsDiffer>
    <experiments>16</experiments>
</comment>
<comment type="interaction">
    <interactant intactId="EBI-79792">
        <id>P51587</id>
    </interactant>
    <interactant intactId="EBI-596878">
        <id>Q9BXW9-2</id>
        <label>FANCD2</label>
    </interactant>
    <organismsDiffer>false</organismsDiffer>
    <experiments>3</experiments>
</comment>
<comment type="interaction">
    <interactant intactId="EBI-79792">
        <id>P51587</id>
    </interactant>
    <interactant intactId="EBI-713401">
        <id>Q9P0W2</id>
        <label>HMG20B</label>
    </interactant>
    <organismsDiffer>false</organismsDiffer>
    <experiments>8</experiments>
</comment>
<comment type="interaction">
    <interactant intactId="EBI-79792">
        <id>P51587</id>
    </interactant>
    <interactant intactId="EBI-373144">
        <id>Q9GZQ8</id>
        <label>MAP1LC3B</label>
    </interactant>
    <organismsDiffer>false</organismsDiffer>
    <experiments>2</experiments>
</comment>
<comment type="interaction">
    <interactant intactId="EBI-79792">
        <id>P51587</id>
    </interactant>
    <interactant intactId="EBI-1222653">
        <id>Q86YC2</id>
        <label>PALB2</label>
    </interactant>
    <organismsDiffer>false</organismsDiffer>
    <experiments>30</experiments>
</comment>
<comment type="interaction">
    <interactant intactId="EBI-79792">
        <id>P51587</id>
    </interactant>
    <interactant intactId="EBI-1175604">
        <id>Q9NTI5</id>
        <label>PDS5B</label>
    </interactant>
    <organismsDiffer>false</organismsDiffer>
    <experiments>26</experiments>
</comment>
<comment type="interaction">
    <interactant intactId="EBI-79792">
        <id>P51587</id>
    </interactant>
    <interactant intactId="EBI-2827270">
        <id>Q9Y253</id>
        <label>POLH</label>
    </interactant>
    <organismsDiffer>false</organismsDiffer>
    <experiments>6</experiments>
</comment>
<comment type="interaction">
    <interactant intactId="EBI-79792">
        <id>P51587</id>
    </interactant>
    <interactant intactId="EBI-297202">
        <id>Q06609</id>
        <label>RAD51</label>
    </interactant>
    <organismsDiffer>false</organismsDiffer>
    <experiments>46</experiments>
</comment>
<comment type="interaction">
    <interactant intactId="EBI-79792">
        <id>P51587</id>
    </interactant>
    <interactant intactId="EBI-15557721">
        <id>Q06609-1</id>
        <label>RAD51</label>
    </interactant>
    <organismsDiffer>false</organismsDiffer>
    <experiments>12</experiments>
</comment>
<comment type="interaction">
    <interactant intactId="EBI-79792">
        <id>P51587</id>
    </interactant>
    <interactant intactId="EBI-79819">
        <id>P60896</id>
        <label>SEM1</label>
    </interactant>
    <organismsDiffer>false</organismsDiffer>
    <experiments>10</experiments>
</comment>
<comment type="interaction">
    <interactant intactId="EBI-79792">
        <id>P51587</id>
    </interactant>
    <interactant intactId="EBI-366083">
        <id>P04637</id>
        <label>TP53</label>
    </interactant>
    <organismsDiffer>false</organismsDiffer>
    <experiments>7</experiments>
</comment>
<comment type="subcellular location">
    <subcellularLocation>
        <location evidence="59 64 82">Nucleus</location>
    </subcellularLocation>
    <subcellularLocation>
        <location evidence="56">Cytoplasm</location>
        <location evidence="56">Cytoskeleton</location>
        <location evidence="56">Microtubule organizing center</location>
        <location evidence="56">Centrosome</location>
    </subcellularLocation>
    <text evidence="64">Colocalizes with ERCC5/XPG to nuclear foci following DNA replication stress.</text>
</comment>
<comment type="tissue specificity">
    <text>Highest levels of expression in breast and thymus, with slightly lower levels in lung, ovary and spleen.</text>
</comment>
<comment type="PTM">
    <text evidence="34 41 48">Phosphorylated by ATM upon irradiation-induced DNA damage. Phosphorylation by CHEK1 and CHEK2 regulates interaction with RAD51. Phosphorylation at Ser-3291 by CDK1 and CDK2 is low in S phase when recombination is active, but increases as cells progress towards mitosis; this phosphorylation prevents homologous recombination-dependent repair during S phase and G2 by inhibiting RAD51 binding.</text>
</comment>
<comment type="PTM">
    <text evidence="36">Ubiquitinated in the absence of DNA damage; this does not lead to proteasomal degradation. In contrast, ubiquitination in response to DNA damage leads to proteasomal degradation.</text>
</comment>
<comment type="disease" evidence="5 7 9 10 11 13 16 18 21 22 24 26 28 30 33 37 44 46 58 59 66 72 76 77 78 79">
    <disease id="DI-02602">
        <name>Breast cancer</name>
        <acronym>BC</acronym>
        <description>A common malignancy originating from breast epithelial tissue. Breast neoplasms can be distinguished by their histologic pattern. Invasive ductal carcinoma is by far the most common type. Breast cancer is etiologically and genetically heterogeneous. Important genetic factors have been indicated by familial occurrence and bilateral involvement. Mutations at more than one locus can be involved in different families or even in the same case.</description>
        <dbReference type="MIM" id="114480"/>
    </disease>
    <text>Disease susceptibility is associated with variants affecting the gene represented in this entry.</text>
</comment>
<comment type="disease" evidence="75">
    <disease id="DI-02847">
        <name>Pancreatic cancer 2</name>
        <acronym>PNCA2</acronym>
        <description>A malignant neoplasm of the pancreas. Tumors can arise from both the exocrine and endocrine portions of the pancreas, but 95% of them develop from the exocrine portion, including the ductal epithelium, acinar cells, connective tissue, and lymphatic tissue.</description>
        <dbReference type="MIM" id="613347"/>
    </disease>
    <text>The disease is caused by variants affecting the gene represented in this entry.</text>
</comment>
<comment type="disease">
    <disease id="DI-02603">
        <name>Breast-ovarian cancer, familial, 2</name>
        <acronym>BROVCA2</acronym>
        <description>A condition associated with familial predisposition to cancer of the breast and ovaries. Characteristic features in affected families are an early age of onset of breast cancer (often before age 50), increased chance of bilateral cancers (cancer that develop in both breasts, or both ovaries, independently), frequent occurrence of breast cancer among men, increased incidence of tumors of other specific organs, such as the prostate.</description>
        <dbReference type="MIM" id="612555"/>
    </disease>
    <text>Disease susceptibility is associated with variants affecting the gene represented in this entry.</text>
</comment>
<comment type="disease" evidence="14 27 45 46 57 58">
    <disease id="DI-01601">
        <name>Fanconi anemia complementation group D1</name>
        <acronym>FANCD1</acronym>
        <description>A disorder affecting all bone marrow elements and resulting in anemia, leukopenia and thrombopenia. It is associated with cardiac, renal and limb malformations, dermal pigmentary changes, and a predisposition to the development of malignancies. At the cellular level it is associated with hypersensitivity to DNA-damaging agents, chromosomal instability (increased chromosome breakage) and defective DNA repair.</description>
        <dbReference type="MIM" id="605724"/>
    </disease>
    <text>The disease is caused by variants affecting the gene represented in this entry.</text>
</comment>
<comment type="disease" evidence="40">
    <disease id="DI-02629">
        <name>Glioma 3</name>
        <acronym>GLM3</acronym>
        <description>Gliomas are benign or malignant central nervous system neoplasms derived from glial cells. They comprise astrocytomas and glioblastoma multiforme that are derived from astrocytes, oligodendrogliomas derived from oligodendrocytes and ependymomas derived from ependymocytes.</description>
        <dbReference type="MIM" id="613029"/>
    </disease>
    <text>The disease is caused by variants affecting the gene represented in this entry.</text>
</comment>
<comment type="disease" evidence="67">
    <disease id="DI-01958">
        <name>Medulloblastoma</name>
        <acronym>MDB</acronym>
        <description>Malignant, invasive embryonal tumor of the cerebellum with a preferential manifestation in children.</description>
        <dbReference type="MIM" id="155255"/>
    </disease>
    <text>Disease susceptibility is associated with variants affecting the gene represented in this entry.</text>
</comment>
<comment type="online information" name="Fanconi Anemia Mutation Database">
    <link uri="https://www2.rockefeller.edu/fanconi/genes/jumpd1"/>
</comment>
<comment type="online information" name="Wikipedia">
    <link uri="https://en.wikipedia.org/wiki/BRCA2"/>
    <text>BRCA2 entry</text>
</comment>
<comment type="online information" name="Atlas of Genetics and Cytogenetics in Oncology and Haematology">
    <link uri="https://atlasgeneticsoncology.org/gene/164/BRCA2"/>
</comment>
<sequence>MPIGSKERPTFFEIFKTRCNKADLGPISLNWFEELSSEAPPYNSEPAEESEHKNNNYEPNLFKTPQRKPSYNQLASTPIIFKEQGLTLPLYQSPVKELDKFKLDLGRNVPNSRHKSLRTVKTKMDQADDVSCPLLNSCLSESPVVLQCTHVTPQRDKSVVCGSLFHTPKFVKGRQTPKHISESLGAEVDPDMSWSSSLATPPTLSSTVLIVRNEEASETVFPHDTTANVKSYFSNHDESLKKNDRFIASVTDSENTNQREAASHGFGKTSGNSFKVNSCKDHIGKSMPNVLEDEVYETVVDTSEEDSFSLCFSKCRTKNLQKVRTSKTRKKIFHEANADECEKSKNQVKEKYSFVSEVEPNDTDPLDSNVANQKPFESGSDKISKEVVPSLACEWSQLTLSGLNGAQMEKIPLLHISSCDQNISEKDLLDTENKRKKDFLTSENSLPRISSLPKSEKPLNEETVVNKRDEEQHLESHTDCILAVKQAISGTSPVASSFQGIKKSIFRIRESPKETFNASFSGHMTDPNFKKETEASESGLEIHTVCSQKEDSLCPNLIDNGSWPATTTQNSVALKNAGLISTLKKKTNKFIYAIHDETSYKGKKIPKDQKSELINCSAQFEANAFEAPLTFANADSGLLHSSVKRSCSQNDSEEPTLSLTSSFGTILRKCSRNETCSNNTVISQDLDYKEAKCNKEKLQLFITPEADSLSCLQEGQCENDPKSKKVSDIKEEVLAAACHPVQHSKVEYSDTDFQSQKSLLYDHENASTLILTPTSKDVLSNLVMISRGKESYKMSDKLKGNNYESDVELTKNIPMEKNQDVCALNENYKNVELLPPEKYMRVASPSRKVQFNQNTNLRVIQKNQEETTSISKITVNPDSEELFSDNENNFVFQVANERNNLALGNTKELHETDLTCVNEPIFKNSTMVLYGDTGDKQATQVSIKKDLVYVLAEENKNSVKQHIKMTLGQDLKSDISLNIDKIPEKNNDYMNKWAGLLGPISNHSFGGSFRTASNKEIKLSEHNIKKSKMFFKDIEEQYPTSLACVEIVNTLALDNQKKLSKPQSINTVSAHLQSSVVVSDCKNSHITPQMLFSKQDFNSNHNLTPSQKAEITELSTILEESGSQFEFTQFRKPSYILQKSTFEVPENQMTILKTTSEECRDADLHVIMNAPSIGQVDSSKQFEGTVEIKRKFAGLLKNDCNKSASGYLTDENEVGFRGFYSAHGTKLNVSTEALQKAVKLFSDIENISEETSAEVHPISLSSSKCHDSVVSMFKIENHNDKTVSEKNNKCQLILQNNIEMTTGTFVEEITENYKRNTENEDNKYTAASRNSHNLEFDGSDSSKNDTVCIHKDETDLLFTDQHNICLKLSGQFMKEGNTQIKEDLSDLTFLEVAKAQEACHGNTSNKEQLTATKTEQNIKDFETSDTFFQTASGKNISVAKESFNKIVNFFDQKPEELHNFSLNSELHSDIRKNKMDILSYEETDIVKHKILKESVPVGTGNQLVTFQGQPERDEKIKEPTLLGFHTASGKKVKIAKESLDKVKNLFDEKEQGTSEITSFSHQWAKTLKYREACKDLELACETIEITAAPKCKEMQNSLNNDKNLVSIETVVPPKLLSDNLCRQTENLKTSKSIFLKVKVHENVEKETAKSPATCYTNQSPYSVIENSALAFYTSCSRKTSVSQTSLLEAKKWLREGIFDGQPERINTADYVGNYLYENNSNSTIAENDKNHLSEKQDTYLSNSSMSNSYSYHSDEVYNDSGYLSKNKLDSGIEPVLKNVEDQKNTSFSKVISNVKDANAYPQTVNEDICVEELVTSSSPCKNKNAAIKLSISNSNNFEVGPPAFRIASGKIVCVSHETIKKVKDIFTDSFSKVIKENNENKSKICQTKIMAGCYEALDDSEDILHNSLDNDECSTHSHKVFADIQSEEILQHNQNMSGLEKVSKISPCDVSLETSDICKCSIGKLHKSVSSANTCGIFSTASGKSVQVSDASLQNARQVFSEIEDSTKQVFSKVLFKSNEHSDQLTREENTAIRTPEHLISQKGFSYNVVNSSAFSGFSTASGKQVSILESSLHKVKGVLEEFDLIRTEHSLHYSPTSRQNVSKILPRVDKRNPEHCVNSEMEKTCSKEFKLSNNLNVEGGSSENNHSIKVSPYLSQFQQDKQQLVLGTKVSLVENIHVLGKEQASPKNVKMEIGKTETFSDVPVKTNIEVCSTYSKDSENYFETEAVEIAKAFMEDDELTDSKLPSHATHSLFTCPENEEMVLSNSRIGKRRGEPLILVGEPSIKRNLLNEFDRIIENQEKSLKASKSTPDGTIKDRRLFMHHVSLEPITCVPFRTTKERQEIQNPNFTAPGQEFLSKSHLYEHLTLEKSSSNLAVSGHPFYQVSATRNEKMRHLITTGRPTKVFVPPFKTKSHFHRVEQCVRNINLEENRQKQNIDGHGSDDSKNKINDNEIHQFNKNNSNQAVAVTFTKCEEEPLDLITSLQNARDIQDMRIKKKQRQRVFPQPGSLYLAKTSTLPRISLKAAVGGQVPSACSHKQLYTYGVSKHCIKINSKNAESFQFHTEDYFGKESLWTGKGIQLADGGWLIPSNDGKAGKEEFYRALCDTPGVDPKLISRIWVYNHYRWIIWKLAAMECAFPKEFANRCLSPERVLLQLKYRYDTEIDRSRRSAIKKIMERDDTAAKTLVLCVSDIISLSANISETSSNKTSSADTQKVAIIELTDGWYAVKAQLDPPLLAVLKNGRLTVGQKIILHGAELVGSPDACTPLEAPESLMLKISANSTRPARWYTKLGFFPDPRPFPLPLSSLFSDGGNVGCVDVIIQRAYPIQWMEKTSSGLYIFRNEREEEKEAAKYVEAQQKRLEALFTKIQEEFEEHEENTTKPYLPSRALTRQQVRALQDGAELYEAVKNAADPAYLEGYFSEEQLRALNNHRQMLNDKKQAQIQLEIRKAMESAEQKEQGLSRDVTTVWKLRIVSYSKKEKDSVILSIWRPSSDLYSLLTEGKRYRIYHLATSKSKSKSERANIQLAATKKTQYQQLPVSDEILFQIYQPREPLHFSKFLDPDFQPSCSEVDLIGFVVSVVKKTGLAPFVYLSDECYNLLAIKFWIDLNEDIIKPHMLIAASNLQWRPESKSGLLTLFAGDFSVFSASPKEGHFQETFNKMKNTVENIDILCNEAENKLMHILHANDPKWSTPTKDCTSGPYTAQIIPGTGNKLLMSSPNCEIYYQSPLSLCMAKRKSVSTPVSAQMTSKSCKGEKEIDDQKNCKKRRALDFLSRLPLPPPVSPICTFVSPAAQKAFQPPRSCGTKYETPIKKKELNSPQMTPFKKFNEISLLESNSIADEELALINTQALLSGSTGEKQFISVSESTRTAPTSSEDYLRLKRRCTTSLIKEQESSQASTEECEKNKQDTITTKKYI</sequence>
<feature type="chain" id="PRO_0000064984" description="Breast cancer type 2 susceptibility protein">
    <location>
        <begin position="1"/>
        <end position="3418"/>
    </location>
</feature>
<feature type="repeat" description="BRCA2 1">
    <location>
        <begin position="1002"/>
        <end position="1036"/>
    </location>
</feature>
<feature type="repeat" description="BRCA2 2">
    <location>
        <begin position="1212"/>
        <end position="1246"/>
    </location>
</feature>
<feature type="repeat" description="BRCA2 3">
    <location>
        <begin position="1421"/>
        <end position="1455"/>
    </location>
</feature>
<feature type="repeat" description="BRCA2 4">
    <location>
        <begin position="1517"/>
        <end position="1551"/>
    </location>
</feature>
<feature type="repeat" description="BRCA2 5">
    <location>
        <begin position="1664"/>
        <end position="1698"/>
    </location>
</feature>
<feature type="repeat" description="BRCA2 6">
    <location>
        <begin position="1837"/>
        <end position="1871"/>
    </location>
</feature>
<feature type="repeat" description="BRCA2 7">
    <location>
        <begin position="1971"/>
        <end position="2005"/>
    </location>
</feature>
<feature type="repeat" description="BRCA2 8">
    <location>
        <begin position="2051"/>
        <end position="2085"/>
    </location>
</feature>
<feature type="region of interest" description="Interaction with PALB2">
    <location>
        <begin position="1"/>
        <end position="40"/>
    </location>
</feature>
<feature type="region of interest" description="Disordered" evidence="2">
    <location>
        <begin position="37"/>
        <end position="68"/>
    </location>
</feature>
<feature type="region of interest" description="Disordered" evidence="2">
    <location>
        <begin position="358"/>
        <end position="381"/>
    </location>
</feature>
<feature type="region of interest" description="Interaction with NPM1" evidence="55">
    <location>
        <begin position="639"/>
        <end position="1000"/>
    </location>
</feature>
<feature type="region of interest" description="Interaction with RAD51" evidence="1">
    <location>
        <begin position="1003"/>
        <end position="2082"/>
    </location>
</feature>
<feature type="region of interest" description="Interaction with POLH" evidence="61">
    <location>
        <begin position="1338"/>
        <end position="1781"/>
    </location>
</feature>
<feature type="region of interest" description="Required for stimulation of POLH DNA polymerization activity">
    <location>
        <begin position="1410"/>
        <end position="1595"/>
    </location>
</feature>
<feature type="region of interest" description="Interaction with HSF2BP" evidence="68">
    <location>
        <begin position="2270"/>
        <end position="2337"/>
    </location>
</feature>
<feature type="region of interest" description="Interaction with FANCD2">
    <location>
        <begin position="2350"/>
        <end position="2545"/>
    </location>
</feature>
<feature type="region of interest" description="Disordered" evidence="2">
    <location>
        <begin position="2430"/>
        <end position="2450"/>
    </location>
</feature>
<feature type="region of interest" description="Interaction with SEM1" evidence="4 43">
    <location>
        <begin position="2481"/>
        <end position="2832"/>
    </location>
</feature>
<feature type="region of interest" description="Disordered" evidence="2">
    <location>
        <begin position="3393"/>
        <end position="3418"/>
    </location>
</feature>
<feature type="short sequence motif" description="Nuclear export signal; masked by interaction with SEM1" evidence="59">
    <location>
        <begin position="2682"/>
        <end position="2698"/>
    </location>
</feature>
<feature type="modified residue" description="Phosphoserine" evidence="85">
    <location>
        <position position="70"/>
    </location>
</feature>
<feature type="modified residue" description="Phosphoserine" evidence="85">
    <location>
        <position position="445"/>
    </location>
</feature>
<feature type="modified residue" description="Phosphoserine" evidence="85">
    <location>
        <position position="492"/>
    </location>
</feature>
<feature type="modified residue" description="Phosphoserine" evidence="84">
    <location>
        <position position="755"/>
    </location>
</feature>
<feature type="modified residue" description="Phosphoserine" evidence="85">
    <location>
        <position position="1970"/>
    </location>
</feature>
<feature type="modified residue" description="Phosphothreonine" evidence="85">
    <location>
        <position position="2035"/>
    </location>
</feature>
<feature type="modified residue" description="Phosphoserine" evidence="85">
    <location>
        <position position="2095"/>
    </location>
</feature>
<feature type="modified residue" description="Phosphoserine; by CDK1 and CDK2" evidence="41">
    <location>
        <position position="3291"/>
    </location>
</feature>
<feature type="modified residue" description="Phosphoserine" evidence="85">
    <location>
        <position position="3319"/>
    </location>
</feature>
<feature type="modified residue" description="Phosphothreonine; by CHEK1 and CHEK2" evidence="48">
    <location>
        <position position="3387"/>
    </location>
</feature>
<feature type="sequence variant" id="VAR_028167" description="In BC; abolishes interaction with PALB2; dbSNP:rs80358961." evidence="44">
    <original>G</original>
    <variation>R</variation>
    <location>
        <position position="25"/>
    </location>
</feature>
<feature type="sequence variant" id="VAR_028168" description="In BC; abolishes interaction with PALB2; dbSNP:rs80359214." evidence="44">
    <original>W</original>
    <variation>C</variation>
    <location>
        <position position="31"/>
    </location>
</feature>
<feature type="sequence variant" id="VAR_028169" description="In BC; abolishes interaction with PALB2; dbSNP:rs80359182." evidence="44">
    <original>W</original>
    <variation>R</variation>
    <location>
        <position position="31"/>
    </location>
</feature>
<feature type="sequence variant" id="VAR_005085" description="In BC; dbSNP:rs397508057 and dbSNP:rs1555280339." evidence="77">
    <original>F</original>
    <variation>L</variation>
    <location>
        <position position="32"/>
    </location>
</feature>
<feature type="sequence variant" id="VAR_020705" description="In BC and ovarian cancer; benign; dbSNP:rs4987046." evidence="22 29">
    <original>Y</original>
    <variation>C</variation>
    <location>
        <position position="42"/>
    </location>
</feature>
<feature type="sequence variant" id="VAR_005086" description="In BC; dbSNP:rs397507595." evidence="77">
    <original>K</original>
    <variation>R</variation>
    <location>
        <position position="53"/>
    </location>
</feature>
<feature type="sequence variant" id="VAR_020706" description="In BC; uncertain significance; dbSNP:rs80358463." evidence="30">
    <original>N</original>
    <variation>S</variation>
    <location>
        <position position="60"/>
    </location>
</feature>
<feature type="sequence variant" id="VAR_032712" description="In BC; dbSNP:rs397507615." evidence="33">
    <original>T</original>
    <variation>I</variation>
    <location>
        <position position="64"/>
    </location>
</feature>
<feature type="sequence variant" id="VAR_005087" description="In dbSNP:rs28897701." evidence="6">
    <original>A</original>
    <variation>P</variation>
    <location>
        <position position="75"/>
    </location>
</feature>
<feature type="sequence variant" id="VAR_005088" description="In BC; dbSNP:rs80358507." evidence="77">
    <original>F</original>
    <variation>L</variation>
    <location>
        <position position="81"/>
    </location>
</feature>
<feature type="sequence variant" id="VAR_008766" description="In dbSNP:rs80358567.">
    <original>N</original>
    <variation>H</variation>
    <location>
        <position position="108"/>
    </location>
</feature>
<feature type="sequence variant" id="VAR_032713" description="In one patient with esophageal carcinoma; dbSNP:rs80358603." evidence="12">
    <original>R</original>
    <variation>H</variation>
    <location>
        <position position="118"/>
    </location>
</feature>
<feature type="sequence variant" id="VAR_032714" description="In one patient with pancreatic cancer; dbSNP:rs80358805." evidence="15">
    <original>M</original>
    <variation>T</variation>
    <location>
        <position position="192"/>
    </location>
</feature>
<feature type="sequence variant" id="VAR_005089" description="In BC; dbSNP:rs397507822." evidence="77">
    <original>P</original>
    <variation>R</variation>
    <location>
        <position position="201"/>
    </location>
</feature>
<feature type="sequence variant" id="VAR_005090" description="In BC." evidence="77">
    <original>V</original>
    <variation>A</variation>
    <location>
        <position position="211"/>
    </location>
</feature>
<feature type="sequence variant" id="VAR_005091" description="In BC; dbSNP:rs397507873." evidence="77">
    <original>P</original>
    <variation>S</variation>
    <location>
        <position position="222"/>
    </location>
</feature>
<feature type="sequence variant" id="VAR_032715" description="In one patient with BC; normal RNA expression and splicing; dbSNP:rs80358897." evidence="35">
    <original>T</original>
    <variation>A</variation>
    <location>
        <position position="225"/>
    </location>
</feature>
<feature type="sequence variant" id="VAR_005092" description="In dbSNP:rs766173." evidence="3 7 10 23 33 37 80">
    <original>N</original>
    <variation>H</variation>
    <location>
        <position position="289"/>
    </location>
</feature>
<feature type="sequence variant" id="VAR_032716" description="In one patient with esophageal carcinoma; dbSNP:rs79483201." evidence="12">
    <original>C</original>
    <variation>S</variation>
    <location>
        <position position="315"/>
    </location>
</feature>
<feature type="sequence variant" id="VAR_018908" description="In dbSNP:rs11571640." evidence="80">
    <original>K</original>
    <variation>Q</variation>
    <location>
        <position position="322"/>
    </location>
</feature>
<feature type="sequence variant" id="VAR_032717" description="In BC; benign; dbSNP:rs28897706." evidence="5">
    <original>S</original>
    <variation>R</variation>
    <location>
        <position position="326"/>
    </location>
</feature>
<feature type="sequence variant" id="VAR_008767" description="In BC; uncertain significance; dbSNP:rs80359242." evidence="79">
    <original>K</original>
    <variation>E</variation>
    <location>
        <position position="327"/>
    </location>
</feature>
<feature type="sequence variant" id="VAR_005093" description="In lung cancer.">
    <original>V</original>
    <variation>L</variation>
    <location>
        <position position="355"/>
    </location>
</feature>
<feature type="sequence variant" id="VAR_005094" description="In dbSNP:rs144848." evidence="3 7 8 23 31 33 37 73 74 80">
    <original>N</original>
    <variation>H</variation>
    <location>
        <position position="372"/>
    </location>
</feature>
<feature type="sequence variant" id="VAR_020707" description="In BC; uncertain significance." evidence="30">
    <original>G</original>
    <variation>R</variation>
    <location>
        <position position="405"/>
    </location>
</feature>
<feature type="sequence variant" id="VAR_020708" description="In BC; uncertain significance; dbSNP:rs876660828." evidence="26">
    <original>T</original>
    <variation>I</variation>
    <location>
        <position position="431"/>
    </location>
</feature>
<feature type="sequence variant" id="VAR_020709" description="In BC; uncertain significance; dbSNP:rs80358423." evidence="30">
    <original>R</original>
    <variation>H</variation>
    <location>
        <position position="448"/>
    </location>
</feature>
<feature type="sequence variant" id="VAR_020710" description="In BC; benign; dbSNP:rs56403624." evidence="23 30 33">
    <original>E</original>
    <variation>G</variation>
    <location>
        <position position="462"/>
    </location>
</feature>
<feature type="sequence variant" id="VAR_032718" description="In BC; benign; dbSNP:rs28897708." evidence="11">
    <original>I</original>
    <variation>T</variation>
    <location>
        <position position="505"/>
    </location>
</feature>
<feature type="sequence variant" id="VAR_056751" description="In dbSNP:rs28897709.">
    <original>K</original>
    <variation>R</variation>
    <location>
        <position position="513"/>
    </location>
</feature>
<feature type="sequence variant" id="VAR_005095" description="In BC; benign; dbSNP:rs80358451." evidence="78">
    <original>C</original>
    <variation>W</variation>
    <location>
        <position position="554"/>
    </location>
</feature>
<feature type="sequence variant" id="VAR_008768" description="In dbSNP:rs80358457." evidence="25">
    <original>T</original>
    <variation>P</variation>
    <location>
        <position position="582"/>
    </location>
</feature>
<feature type="sequence variant" id="VAR_020711" description="In dbSNP:rs28897710." evidence="17">
    <original>T</original>
    <variation>A</variation>
    <location>
        <position position="598"/>
    </location>
</feature>
<feature type="sequence variant" id="VAR_035436" description="In dbSNP:rs1046984." evidence="70">
    <original>S</original>
    <variation>F</variation>
    <location>
        <position position="599"/>
    </location>
</feature>
<feature type="sequence variant" id="VAR_076440" description="In dbSNP:rs80358469." evidence="63">
    <original>P</original>
    <variation>L</variation>
    <location>
        <position position="606"/>
    </location>
</feature>
<feature type="sequence variant" id="VAR_020712" description="In BC; uncertain significance; dbSNP:rs587780646." evidence="22">
    <original>L</original>
    <variation>R</variation>
    <location>
        <position position="613"/>
    </location>
</feature>
<feature type="sequence variant" id="VAR_005096" description="In dbSNP:rs80358479.">
    <original>T</original>
    <variation>I</variation>
    <location>
        <position position="630"/>
    </location>
</feature>
<feature type="sequence variant" id="VAR_008769" description="In dbSNP:rs80358487.">
    <original>D</original>
    <variation>Y</variation>
    <location>
        <position position="707"/>
    </location>
</feature>
<feature type="sequence variant" id="VAR_005097" description="In BC; dbSNP:rs757577670." evidence="66">
    <original>D</original>
    <variation>A</variation>
    <location>
        <position position="728"/>
    </location>
</feature>
<feature type="sequence variant" id="VAR_032719" description="In BC; dbSNP:rs397507620." evidence="7">
    <original>I</original>
    <variation>M</variation>
    <location>
        <position position="729"/>
    </location>
</feature>
<feature type="sequence variant" id="VAR_008770" description="In dbSNP:rs11571653." evidence="10 37 80">
    <original>M</original>
    <variation>V</variation>
    <location>
        <position position="784"/>
    </location>
</feature>
<feature type="sequence variant" id="VAR_008771" description="In dbSNP:rs80358526.">
    <original>N</original>
    <variation>I</variation>
    <location>
        <position position="886"/>
    </location>
</feature>
<feature type="sequence variant" id="VAR_018909" description="In dbSNP:rs2227943." evidence="80">
    <original>L</original>
    <variation>S</variation>
    <location>
        <position position="929"/>
    </location>
</feature>
<feature type="sequence variant" id="VAR_008772" description="In BC; uncertain significance; dbSNP:rs28897716." evidence="79">
    <original>D</original>
    <variation>N</variation>
    <location>
        <position position="935"/>
    </location>
</feature>
<feature type="sequence variant" id="VAR_018910" description="In dbSNP:rs11571656." evidence="80">
    <original>S</original>
    <variation>F</variation>
    <location>
        <position position="976"/>
    </location>
</feature>
<feature type="sequence variant" id="VAR_056752" description="In dbSNP:rs28897717.">
    <original>I</original>
    <variation>L</variation>
    <location>
        <position position="982"/>
    </location>
</feature>
<feature type="sequence variant" id="VAR_018911" description="In dbSNP:rs2227944." evidence="80">
    <original>N</original>
    <variation>I</variation>
    <location>
        <position position="987"/>
    </location>
</feature>
<feature type="sequence variant" id="VAR_005098" description="In dbSNP:rs1799944." evidence="3 7 23 30 33 37 74 80">
    <original>N</original>
    <variation>D</variation>
    <location>
        <position position="991"/>
    </location>
</feature>
<feature type="sequence variant" id="VAR_020713" description="In BC; uncertain significance." evidence="26">
    <original>E</original>
    <variation>K</variation>
    <location>
        <position position="1036"/>
    </location>
</feature>
<feature type="sequence variant" id="VAR_020714" description="In BC; uncertain significance; dbSNP:rs1298550035." evidence="26">
    <original>S</original>
    <variation>R</variation>
    <location>
        <position position="1106"/>
    </location>
</feature>
<feature type="sequence variant" id="VAR_005099" description="In dbSNP:rs1799951." evidence="74">
    <original>N</original>
    <variation>S</variation>
    <location>
        <position position="1147"/>
    </location>
</feature>
<feature type="sequence variant" id="VAR_032720" description="In BC; benign; dbSNP:rs80358600." evidence="38">
    <original>S</original>
    <variation>L</variation>
    <location>
        <position position="1172"/>
    </location>
</feature>
<feature type="sequence variant" id="VAR_020715" description="In BC; dbSNP:rs397507674." evidence="9">
    <original>S</original>
    <variation>N</variation>
    <location>
        <position position="1179"/>
    </location>
</feature>
<feature type="sequence variant" id="VAR_020716" description="In dbSNP:rs1060502384." evidence="23 33">
    <original>N</original>
    <variation>S</variation>
    <location>
        <position position="1279"/>
    </location>
</feature>
<feature type="sequence variant" id="VAR_008773">
    <location>
        <position position="1286"/>
    </location>
</feature>
<feature type="sequence variant" id="VAR_008774" description="In dbSNP:rs41293485.">
    <original>C</original>
    <variation>Y</variation>
    <location>
        <position position="1290"/>
    </location>
</feature>
<feature type="sequence variant" id="VAR_005100" description="In BC.">
    <location>
        <position position="1302"/>
    </location>
</feature>
<feature type="sequence variant" id="VAR_008775" description="In dbSNP:rs70953664.">
    <original>T</original>
    <variation>M</variation>
    <location>
        <position position="1414"/>
    </location>
</feature>
<feature type="sequence variant" id="VAR_008776" description="In dbSNP:rs28897727." evidence="9 17 23 33 38 63">
    <original>D</original>
    <variation>Y</variation>
    <location>
        <position position="1420"/>
    </location>
</feature>
<feature type="sequence variant" id="VAR_020717" description="In BC; uncertain significance." evidence="37">
    <original>K</original>
    <variation>T</variation>
    <location>
        <position position="1445"/>
    </location>
</feature>
<feature type="sequence variant" id="VAR_008777" description="In dbSNP:rs80358687.">
    <original>D</original>
    <variation>N</variation>
    <location>
        <position position="1513"/>
    </location>
</feature>
<feature type="sequence variant" id="VAR_032721" description="In one patient with BC; dbSNP:rs397507729." evidence="25">
    <original>L</original>
    <variation>F</variation>
    <location>
        <position position="1522"/>
    </location>
</feature>
<feature type="sequence variant" id="VAR_020718" description="In BC; benign; dbSNP:rs56386506." evidence="26">
    <original>F</original>
    <variation>V</variation>
    <location>
        <position position="1524"/>
    </location>
</feature>
<feature type="sequence variant" id="VAR_005101" description="In dbSNP:rs28897728.">
    <original>G</original>
    <variation>R</variation>
    <location>
        <position position="1529"/>
    </location>
</feature>
<feature type="sequence variant" id="VAR_056753" description="In dbSNP:rs28897729.">
    <original>V</original>
    <variation>M</variation>
    <location>
        <position position="1542"/>
    </location>
</feature>
<feature type="sequence variant" id="VAR_018912" description="In dbSNP:rs2219594." evidence="80">
    <original>H</original>
    <variation>N</variation>
    <location>
        <position position="1561"/>
    </location>
</feature>
<feature type="sequence variant" id="VAR_020719" description="In BC; somatic mutation; dbSNP:rs398122784." evidence="13">
    <original>C</original>
    <variation>Y</variation>
    <location>
        <position position="1580"/>
    </location>
</feature>
<feature type="sequence variant" id="VAR_008778" description="In dbSNP:rs80358703." evidence="20">
    <original>E</original>
    <variation>D</variation>
    <location>
        <position position="1593"/>
    </location>
</feature>
<feature type="sequence variant" id="VAR_056754" description="In dbSNP:rs28897731.">
    <original>V</original>
    <variation>A</variation>
    <location>
        <position position="1643"/>
    </location>
</feature>
<feature type="sequence variant" id="VAR_020720" description="In BC." evidence="28">
    <original>T</original>
    <variation>I</variation>
    <location>
        <position position="1679"/>
    </location>
</feature>
<feature type="sequence variant" id="VAR_032722" description="In BC; benign; dbSNP:rs56087561." evidence="33">
    <original>K</original>
    <variation>N</variation>
    <location>
        <position position="1690"/>
    </location>
</feature>
<feature type="sequence variant" id="VAR_032723" description="In BC; dbSNP:rs397507770." evidence="11">
    <original>N</original>
    <variation>Y</variation>
    <location>
        <position position="1730"/>
    </location>
</feature>
<feature type="sequence variant" id="VAR_008779" description="In BC; benign; dbSNP:rs80358755." evidence="23 33">
    <original>G</original>
    <variation>D</variation>
    <location>
        <position position="1771"/>
    </location>
</feature>
<feature type="sequence variant" id="VAR_020721" description="In BC; dbSNP:rs370252983." evidence="28">
    <original>V</original>
    <variation>A</variation>
    <location>
        <position position="1804"/>
    </location>
</feature>
<feature type="sequence variant" id="VAR_008780" description="In dbSNP:rs80358765.">
    <original>N</original>
    <variation>S</variation>
    <location>
        <position position="1805"/>
    </location>
</feature>
<feature type="sequence variant" id="VAR_005102" description="In dbSNP:rs11571657." evidence="11 80">
    <original>N</original>
    <variation>K</variation>
    <location>
        <position position="1880"/>
    </location>
</feature>
<feature type="sequence variant" id="VAR_032724" description="In BC; dbSNP:rs397507795." evidence="33">
    <original>T</original>
    <variation>M</variation>
    <location>
        <position position="1887"/>
    </location>
</feature>
<feature type="sequence variant" id="VAR_020722" description="In BC." evidence="28">
    <original>E</original>
    <variation>K</variation>
    <location>
        <position position="1901"/>
    </location>
</feature>
<feature type="sequence variant" id="VAR_008781" description="In dbSNP:rs4987048.">
    <original>D</original>
    <variation>N</variation>
    <location>
        <position position="1902"/>
    </location>
</feature>
<feature type="sequence variant" id="VAR_005103" description="In dbSNP:rs4987117." evidence="7 13 33 73 74 80">
    <original>T</original>
    <variation>M</variation>
    <location>
        <position position="1915"/>
    </location>
</feature>
<feature type="sequence variant" id="VAR_020723" description="In BC; benign; dbSNP:rs79538375." evidence="37">
    <original>I</original>
    <variation>V</variation>
    <location>
        <position position="1929"/>
    </location>
</feature>
<feature type="sequence variant" id="VAR_056755" description="In dbSNP:rs28897737.">
    <original>S</original>
    <variation>R</variation>
    <location>
        <position position="1979"/>
    </location>
</feature>
<feature type="sequence variant" id="VAR_032725" description="In one patient with esophageal carcinoma; somatic mutation; dbSNP:rs28897739." evidence="12">
    <original>V</original>
    <variation>I</variation>
    <location>
        <position position="1988"/>
    </location>
</feature>
<feature type="sequence variant" id="VAR_020724" description="In BC; uncertain significance." evidence="37">
    <original>T</original>
    <variation>A</variation>
    <location>
        <position position="2031"/>
    </location>
</feature>
<feature type="sequence variant" id="VAR_005104" description="In dbSNP:rs1799954." evidence="17 24 74">
    <original>R</original>
    <variation>C</variation>
    <location>
        <position position="2034"/>
    </location>
</feature>
<feature type="sequence variant" id="VAR_032726" description="In one patient with BC; dbSNP:rs56191579." evidence="25">
    <original>G</original>
    <variation>V</variation>
    <location>
        <position position="2044"/>
    </location>
</feature>
<feature type="sequence variant" id="VAR_020725" description="In BC; dbSNP:rs80358862." evidence="18">
    <original>S</original>
    <variation>C</variation>
    <location>
        <position position="2072"/>
    </location>
</feature>
<feature type="sequence variant" id="VAR_008782" description="In dbSNP:rs34309943.">
    <original>H</original>
    <variation>N</variation>
    <location>
        <position position="2074"/>
    </location>
</feature>
<feature type="sequence variant" id="VAR_008783" description="In BC." evidence="76">
    <original>E</original>
    <variation>D</variation>
    <location>
        <position position="2089"/>
    </location>
</feature>
<feature type="sequence variant" id="VAR_020726" description="In BC; dbSNP:rs397507838." evidence="18">
    <original>Y</original>
    <variation>C</variation>
    <location>
        <position position="2094"/>
    </location>
</feature>
<feature type="sequence variant" id="VAR_020727" description="In BC." evidence="28">
    <original>P</original>
    <variation>L</variation>
    <location>
        <position position="2096"/>
    </location>
</feature>
<feature type="sequence variant" id="VAR_032727" description="In dbSNP:rs55794205." evidence="33">
    <original>R</original>
    <variation>C</variation>
    <location>
        <position position="2108"/>
    </location>
</feature>
<feature type="sequence variant" id="VAR_061563" description="In dbSNP:rs55953736.">
    <original>H</original>
    <variation>R</variation>
    <location>
        <position position="2116"/>
    </location>
</feature>
<feature type="sequence variant" id="VAR_020728" description="In BC; uncertain significance." evidence="22">
    <original>V</original>
    <variation>L</variation>
    <location>
        <position position="2118"/>
    </location>
</feature>
<feature type="sequence variant" id="VAR_020729" description="In BC; dbSNP:rs397507847." evidence="18">
    <original>K</original>
    <variation>N</variation>
    <location>
        <position position="2128"/>
    </location>
</feature>
<feature type="sequence variant" id="VAR_032728" description="In BC; dbSNP:rs80358876." evidence="11">
    <original>N</original>
    <variation>H</variation>
    <location>
        <position position="2135"/>
    </location>
</feature>
<feature type="sequence variant" id="VAR_008784" description="In dbSNP:rs11571659." evidence="80">
    <original>V</original>
    <variation>F</variation>
    <location>
        <position position="2138"/>
    </location>
</feature>
<feature type="sequence variant" id="VAR_018913" description="In dbSNP:rs11571660." evidence="80">
    <original>K</original>
    <variation>R</variation>
    <location>
        <position position="2162"/>
    </location>
</feature>
<feature type="sequence variant" id="VAR_032729" description="In BC; dbSNP:rs397507875." evidence="11">
    <original>Y</original>
    <variation>C</variation>
    <location>
        <position position="2222"/>
    </location>
</feature>
<feature type="sequence variant" id="VAR_056756" description="In dbSNP:rs28897742.">
    <original>D</original>
    <variation>E</variation>
    <location>
        <position position="2238"/>
    </location>
</feature>
<feature type="sequence variant" id="VAR_005105" description="In BC; dbSNP:rs55712212.">
    <original>G</original>
    <variation>V</variation>
    <location>
        <position position="2274"/>
    </location>
</feature>
<feature type="sequence variant" id="VAR_020730" description="In BC; uncertain significance." evidence="30">
    <original>E</original>
    <variation>G</variation>
    <location>
        <position position="2275"/>
    </location>
</feature>
<feature type="sequence variant" id="VAR_020731" description="In BC; uncertain significance; dbSNP:rs80358912 and dbSNP:rs1381512588." evidence="22">
    <original>F</original>
    <variation>L</variation>
    <location>
        <position position="2293"/>
    </location>
</feature>
<feature type="sequence variant" id="VAR_032730" description="In FANCD1; affects protein splicing and expression; decreases homologous recombination-mediated DNA repair; dbSNP:rs28897743." evidence="45 46 57">
    <original>R</original>
    <variation>H</variation>
    <location>
        <position position="2336"/>
    </location>
</feature>
<feature type="sequence variant" id="VAR_056757" description="In dbSNP:rs28897743.">
    <original>R</original>
    <variation>Q</variation>
    <location>
        <position position="2336"/>
    </location>
</feature>
<feature type="sequence variant" id="VAR_020732" description="In BC; benign; dbSNP:rs80358935." evidence="30">
    <original>G</original>
    <variation>R</variation>
    <location>
        <position position="2353"/>
    </location>
</feature>
<feature type="sequence variant" id="VAR_005106" description="In BC." evidence="72">
    <original>H</original>
    <variation>N</variation>
    <location>
        <position position="2415"/>
    </location>
</feature>
<feature type="sequence variant" id="VAR_005107" description="In BC.">
    <original>Q</original>
    <variation>H</variation>
    <location>
        <position position="2421"/>
    </location>
</feature>
<feature type="sequence variant" id="VAR_018914" description="No effect on homology-directed repair activity; dbSNP:rs4986860." evidence="58 80">
    <original>H</original>
    <variation>R</variation>
    <location>
        <position position="2440"/>
    </location>
</feature>
<feature type="sequence variant" id="VAR_056758" description="In dbSNP:rs4986859.">
    <original>N</original>
    <variation>D</variation>
    <location>
        <position position="2447"/>
    </location>
</feature>
<feature type="sequence variant" id="VAR_032731" description="In BC; dbSNP:rs397507912." evidence="33">
    <original>Q</original>
    <variation>E</variation>
    <location>
        <position position="2456"/>
    </location>
</feature>
<feature type="sequence variant" id="VAR_008785" description="In BC; benign; no effect on homology-directed repair activity; dbSNP:rs169547." evidence="23 31 33 58 69 70 73 80">
    <original>V</original>
    <variation>A</variation>
    <location>
        <position position="2466"/>
    </location>
</feature>
<feature type="sequence variant" id="VAR_008786" description="In dbSNP:rs80358965.">
    <original>L</original>
    <variation>V</variation>
    <location>
        <position position="2480"/>
    </location>
</feature>
<feature type="sequence variant" id="VAR_020733" description="In BC; uncertain significance; dbSNP:rs80358968." evidence="30">
    <original>R</original>
    <variation>K</variation>
    <location>
        <position position="2488"/>
    </location>
</feature>
<feature type="sequence variant" id="VAR_008787" description="No effect on homologous recombination-mediated DNA repair; no effect on interaction with SEM1; dbSNP:rs11571707." evidence="57 80">
    <original>I</original>
    <variation>T</variation>
    <location>
        <position position="2490"/>
    </location>
</feature>
<feature type="sequence variant" id="VAR_063911" description="In BC; uncertain significance; dbSNP:rs55716624." evidence="46">
    <original>R</original>
    <variation>C</variation>
    <location>
        <position position="2502"/>
    </location>
</feature>
<feature type="sequence variant" id="VAR_008788" description="In dbSNP:rs56070345." evidence="6">
    <original>R</original>
    <variation>H</variation>
    <location>
        <position position="2502"/>
    </location>
</feature>
<feature type="sequence variant" id="VAR_032732" description="In FANCD1; hypersensitive to DNA damage; disrupts interaction with SEM1; decreased homology-directed repair activity; dbSNP:rs80358979." evidence="27 57 58">
    <original>L</original>
    <variation>P</variation>
    <location>
        <position position="2510"/>
    </location>
</feature>
<feature type="sequence variant" id="VAR_008789" description="In BC; benign; dbSNP:rs28897744." evidence="7">
    <original>T</original>
    <variation>I</variation>
    <location>
        <position position="2515"/>
    </location>
</feature>
<feature type="sequence variant" id="VAR_032733" description="In FANCD1; hypersensitive to DNA damage; reduced homology-directed repair activity; no effect on interaction with SEM1; dbSNP:rs80359013." evidence="45 46 57 58">
    <original>W</original>
    <variation>C</variation>
    <location>
        <position position="2626"/>
    </location>
</feature>
<feature type="sequence variant" id="VAR_063912" description="In BC; pathogenic; reduced homology-directed repair activity; dbSNP:rs80359014." evidence="46 58">
    <original>I</original>
    <variation>F</variation>
    <location>
        <position position="2627"/>
    </location>
</feature>
<feature type="sequence variant" id="VAR_063913" description="In BC; uncertain significance; reduced homology-directed repair activity; dbSNP:rs80359022." evidence="46 58">
    <original>L</original>
    <variation>P</variation>
    <location>
        <position position="2653"/>
    </location>
</feature>
<feature type="sequence variant" id="VAR_063914" description="In BC; uncertain significance; dbSNP:rs80359027." evidence="46">
    <original>R</original>
    <variation>K</variation>
    <location>
        <position position="2659"/>
    </location>
</feature>
<feature type="sequence variant" id="VAR_063915" description="In BC; pathogenic; major splicing aberration identified with this mutant; dbSNP:rs80359031." evidence="46 51">
    <original>E</original>
    <variation>V</variation>
    <location>
        <position position="2663"/>
    </location>
</feature>
<feature type="sequence variant" id="VAR_056759" description="In dbSNP:rs28897746.">
    <original>L</original>
    <variation>P</variation>
    <location>
        <position position="2686"/>
    </location>
</feature>
<feature type="sequence variant" id="VAR_020734" description="In dbSNP:rs80359055." evidence="20">
    <original>N</original>
    <variation>S</variation>
    <location>
        <position position="2706"/>
    </location>
</feature>
<feature type="sequence variant" id="VAR_018661" description="In BC; pathogenic; reduced homology-directed repair activity; dbSNP:rs80359062." evidence="16 46 58">
    <original>T</original>
    <variation>R</variation>
    <location>
        <position position="2722"/>
    </location>
</feature>
<feature type="sequence variant" id="VAR_063916" description="In BC; pathogenic; major splicing aberration identified with this mutant; reduced homology-directed repair activity; dbSNP:rs41293513." evidence="46 51 58">
    <original>D</original>
    <variation>G</variation>
    <location>
        <position position="2723"/>
    </location>
</feature>
<feature type="sequence variant" id="VAR_020735" description="In BC; pathogenic; disrupts interaction with SEM1 promoting interaction with XPO1 and BRCA2 cytoplasmic localization; in heterozygous state promotes RAD51 cytoplasmic localization; reduced homology-directed repair activity; dbSNP:rs41293511." evidence="30 58 59">
    <original>D</original>
    <variation>H</variation>
    <location>
        <position position="2723"/>
    </location>
</feature>
<feature type="sequence variant" id="VAR_020736" description="In BC; benign; dbSNP:rs28897749." evidence="5 7 17">
    <original>V</original>
    <variation>I</variation>
    <location>
        <position position="2728"/>
    </location>
</feature>
<feature type="sequence variant" id="VAR_020737" description="In BC; benign; no effect on homologous recombination-mediated DNA repair; no effect on interaction with SEM1; dbSNP:rs80359065." evidence="21 57 58">
    <original>K</original>
    <variation>N</variation>
    <location>
        <position position="2729"/>
    </location>
</feature>
<feature type="sequence variant" id="VAR_063917" description="In BC; pathogenic; dbSNP:rs80359071." evidence="46">
    <original>G</original>
    <variation>D</variation>
    <location>
        <position position="2748"/>
    </location>
</feature>
<feature type="sequence variant" id="VAR_008790" description="In BC; uncertain significance; also found in ovarian cancer; uncertain significance; somatic mutation; small decrease of homology-directed repair activity; dbSNP:rs80359078." evidence="58 73">
    <original>R</original>
    <variation>H</variation>
    <location>
        <position position="2787"/>
    </location>
</feature>
<feature type="sequence variant" id="VAR_056760" description="In BC; uncertain significance; decreased homology-directed repair activity; dbSNP:rs28897751." evidence="58">
    <original>L</original>
    <variation>P</variation>
    <location>
        <position position="2792"/>
    </location>
</feature>
<feature type="sequence variant" id="VAR_020738" description="In BC; uncertain significance; decreased homology-directed repair activity; dbSNP:rs80359082." evidence="22 58">
    <original>G</original>
    <variation>R</variation>
    <location>
        <position position="2793"/>
    </location>
</feature>
<feature type="sequence variant" id="VAR_018915" description="In dbSNP:rs11571746." evidence="80">
    <original>S</original>
    <variation>P</variation>
    <location>
        <position position="2835"/>
    </location>
</feature>
<feature type="sequence variant" id="VAR_032734" description="In one patient with esophageal carcinoma; somatic mutation; decreased homology-directed repair activity; dbSNP:rs80359104." evidence="12 58">
    <original>R</original>
    <variation>C</variation>
    <location>
        <position position="2842"/>
    </location>
</feature>
<feature type="sequence variant" id="VAR_018916" description="In BC; uncertain significance; no effect on homology-directed repair activity; dbSNP:rs11571747." evidence="30 58 80">
    <original>E</original>
    <variation>A</variation>
    <location>
        <position position="2856"/>
    </location>
</feature>
<feature type="sequence variant" id="VAR_008791" description="In dbSNP:rs4987047." evidence="38 80">
    <original>I</original>
    <variation>F</variation>
    <location>
        <position position="2944"/>
    </location>
</feature>
<feature type="sequence variant" id="VAR_020739" description="In BC; uncertain significance; dbSNP:rs28897754." evidence="30 38">
    <original>K</original>
    <variation>N</variation>
    <location>
        <position position="2950"/>
    </location>
</feature>
<feature type="sequence variant" id="VAR_008792" description="In BC; benign; no effect on homology-directed repair activity; dbSNP:rs11571769." evidence="17 58 80">
    <original>A</original>
    <variation>T</variation>
    <location>
        <position position="2951"/>
    </location>
</feature>
<feature type="sequence variant" id="VAR_008793" description="In dbSNP:rs59004709.">
    <original>V</original>
    <variation>M</variation>
    <location>
        <position position="2969"/>
    </location>
</feature>
<feature type="sequence variant" id="VAR_020740" description="In BC; benign; no effect on homology-directed repair activity; dbSNP:rs28897755." evidence="30 38 58">
    <original>T</original>
    <variation>I</variation>
    <location>
        <position position="3013"/>
    </location>
</feature>
<feature type="sequence variant" id="VAR_063918" description="In BC; pathogenic; reduced homology-directed repair activity; dbSNP:rs45580035." evidence="51 58">
    <original>R</original>
    <variation>W</variation>
    <location>
        <position position="3052"/>
    </location>
</feature>
<feature type="sequence variant" id="VAR_020741" description="In a patient with ovarian cancer; uncertain significance; no effect on homology-directed repair activity; dbSNP:rs80359176." evidence="29 58">
    <original>P</original>
    <variation>S</variation>
    <location>
        <position position="3063"/>
    </location>
</feature>
<feature type="sequence variant" id="VAR_020742" description="In BC; also found in pancreatic cancer; decreased homology-directed repair activity; dbSNP:rs80359187." evidence="10 24 58">
    <original>G</original>
    <variation>E</variation>
    <location>
        <position position="3076"/>
    </location>
</feature>
<feature type="sequence variant" id="VAR_005108" description="In BC; uncertain significance; reduced homology-directed repair activity; dbSNP:rs80359198." evidence="46 58 71">
    <original>D</original>
    <variation>E</variation>
    <location>
        <position position="3095"/>
    </location>
</feature>
<feature type="sequence variant" id="VAR_008794" description="In BC and ovarian cancer; benign; no effect on homology-directed repair activity; dbSNP:rs41293521." evidence="6 30 58">
    <original>Y</original>
    <variation>H</variation>
    <location>
        <position position="3098"/>
    </location>
</feature>
<feature type="sequence variant" id="VAR_056761" description="In dbSNP:rs28897758.">
    <original>L</original>
    <variation>R</variation>
    <location>
        <position position="3101"/>
    </location>
</feature>
<feature type="sequence variant" id="VAR_005109" description="In melanoma; dbSNP:rs80359204.">
    <original>I</original>
    <variation>M</variation>
    <location>
        <position position="3103"/>
    </location>
</feature>
<feature type="sequence variant" id="VAR_005110" description="In BC; dbSNP:rs56204128." evidence="77">
    <original>M</original>
    <variation>T</variation>
    <location>
        <position position="3118"/>
    </location>
</feature>
<feature type="sequence variant" id="VAR_020743" description="In BC; pathogenic; reduced homology-directed repair activity; dbSNP:rs28897759." evidence="9 58">
    <original>N</original>
    <variation>I</variation>
    <location>
        <position position="3124"/>
    </location>
</feature>
<feature type="sequence variant" id="VAR_020744" description="In BC; dbSNP:rs80359228." evidence="9">
    <original>K</original>
    <variation>E</variation>
    <location>
        <position position="3196"/>
    </location>
</feature>
<feature type="sequence variant" id="VAR_018917" description="In dbSNP:rs11571831." evidence="80">
    <original>V</original>
    <variation>I</variation>
    <location>
        <position position="3244"/>
    </location>
</feature>
<feature type="sequence variant" id="VAR_008795" description="In dbSNP:rs55847618.">
    <original>K</original>
    <variation>R</variation>
    <location>
        <position position="3257"/>
    </location>
</feature>
<feature type="sequence variant" id="VAR_008796" description="In dbSNP:rs80359245.">
    <original>R</original>
    <variation>S</variation>
    <location>
        <position position="3276"/>
    </location>
</feature>
<feature type="sequence variant" id="VAR_032735" description="In one patient with esophageal carcinoma; dbSNP:rs770868371." evidence="12">
    <original>P</original>
    <variation>S</variation>
    <location>
        <position position="3300"/>
    </location>
</feature>
<feature type="sequence variant" id="VAR_005111" description="In BC; dbSNP:rs80358388.">
    <original>T</original>
    <variation>R</variation>
    <location>
        <position position="3357"/>
    </location>
</feature>
<feature type="sequence variant" id="VAR_020745" description="In dbSNP:rs56309455." evidence="22">
    <original>T</original>
    <variation>I</variation>
    <location>
        <position position="3374"/>
    </location>
</feature>
<feature type="sequence variant" id="VAR_005112" description="In dbSNP:rs1801426." evidence="3 7 21 29 30 37 76 80">
    <original>I</original>
    <variation>V</variation>
    <location>
        <position position="3412"/>
    </location>
</feature>
<feature type="mutagenesis site" description="Disrupts interaction with SEM1." evidence="59">
    <original>W</original>
    <variation>A</variation>
    <location>
        <position position="2725"/>
    </location>
</feature>
<feature type="mutagenesis site" description="Impaired interaction with RAD51." evidence="41">
    <original>S</original>
    <variation>E</variation>
    <location>
        <position position="3291"/>
    </location>
</feature>
<feature type="mutagenesis site" description="Loss of phosphorylation by CHEK1 and CHEK2 (in vitro)." evidence="48">
    <original>T</original>
    <variation>A</variation>
    <location>
        <position position="3387"/>
    </location>
</feature>
<feature type="sequence conflict" description="In Ref. 1; CAA64484." evidence="81" ref="1">
    <original>S</original>
    <variation>N</variation>
    <location>
        <position position="758"/>
    </location>
</feature>
<feature type="sequence conflict" description="In Ref. 1; CAA64484." evidence="81" ref="1">
    <original>GY</original>
    <variation>RI</variation>
    <location>
        <begin position="1761"/>
        <end position="1762"/>
    </location>
</feature>
<feature type="sequence conflict" description="In Ref. 1; CAA64484." evidence="81" ref="1">
    <original>K</original>
    <variation>N</variation>
    <location>
        <position position="1767"/>
    </location>
</feature>
<feature type="sequence conflict" description="In Ref. 4; CAA98995." evidence="81" ref="4">
    <original>S</original>
    <variation>P</variation>
    <location>
        <position position="2536"/>
    </location>
</feature>
<feature type="sequence conflict" description="In Ref. 4; CAA97728." evidence="81" ref="4">
    <original>L</original>
    <variation>LVS</variation>
    <location>
        <position position="3216"/>
    </location>
</feature>
<feature type="helix" evidence="87">
    <location>
        <begin position="31"/>
        <end position="35"/>
    </location>
</feature>
<feature type="strand" evidence="88">
    <location>
        <begin position="203"/>
        <end position="206"/>
    </location>
</feature>
<feature type="strand" evidence="93">
    <location>
        <begin position="1219"/>
        <end position="1221"/>
    </location>
</feature>
<feature type="strand" evidence="89">
    <location>
        <begin position="1228"/>
        <end position="1230"/>
    </location>
</feature>
<feature type="helix" evidence="93">
    <location>
        <begin position="1231"/>
        <end position="1242"/>
    </location>
</feature>
<feature type="strand" evidence="91">
    <location>
        <begin position="1257"/>
        <end position="1259"/>
    </location>
</feature>
<feature type="helix" evidence="86">
    <location>
        <begin position="1520"/>
        <end position="1522"/>
    </location>
</feature>
<feature type="helix" evidence="86">
    <location>
        <begin position="1536"/>
        <end position="1541"/>
    </location>
</feature>
<feature type="turn" evidence="86">
    <location>
        <begin position="1542"/>
        <end position="1546"/>
    </location>
</feature>
<feature type="strand" evidence="92">
    <location>
        <begin position="2058"/>
        <end position="2060"/>
    </location>
</feature>
<feature type="strand" evidence="90">
    <location>
        <begin position="2300"/>
        <end position="2302"/>
    </location>
</feature>
<feature type="helix" evidence="90">
    <location>
        <begin position="2311"/>
        <end position="2314"/>
    </location>
</feature>
<feature type="strand" evidence="90">
    <location>
        <begin position="2315"/>
        <end position="2317"/>
    </location>
</feature>
<reference key="1">
    <citation type="journal article" date="1995" name="Nature">
        <title>Identification of the breast cancer susceptibility gene BRCA2.</title>
        <authorList>
            <person name="Wooster R."/>
            <person name="Bignell G."/>
            <person name="Lancaster J."/>
            <person name="Swift S."/>
            <person name="Seal S."/>
            <person name="Mangion J."/>
            <person name="Collins N."/>
            <person name="Gregory S."/>
            <person name="Gumbs C."/>
            <person name="Micklem G."/>
            <person name="Barfoot R."/>
            <person name="Hamoudi R."/>
            <person name="Patel S."/>
            <person name="Rice C."/>
            <person name="Biggs P."/>
            <person name="Hashim Y."/>
            <person name="Smith A."/>
            <person name="Connor F."/>
            <person name="Arason A."/>
            <person name="Gudmundsson J."/>
            <person name="Ficenec D."/>
            <person name="Kelsell D."/>
            <person name="Ford D."/>
            <person name="Tonin P."/>
            <person name="Bishop D.T."/>
            <person name="Spurr N.K."/>
            <person name="Ponder B.A.J."/>
            <person name="Eeles R."/>
            <person name="Peto J."/>
            <person name="Devilee P."/>
            <person name="Cornelisse C."/>
            <person name="Lynch H."/>
            <person name="Narod S."/>
            <person name="Lenoir G."/>
            <person name="Egilsson V."/>
            <person name="Barkadottir R.B."/>
            <person name="Easton D.F."/>
            <person name="Bentley D.R."/>
            <person name="Futreal P.A."/>
            <person name="Ashworth A."/>
            <person name="Stratton M.R."/>
        </authorList>
    </citation>
    <scope>NUCLEOTIDE SEQUENCE [GENOMIC DNA]</scope>
    <scope>VARIANT ALA-2466</scope>
</reference>
<reference key="2">
    <citation type="journal article" date="1996" name="Nat. Genet.">
        <title>The complete BRCA2 gene and mutations in chromosome 13q-linked kindreds.</title>
        <authorList>
            <person name="Tavtigian S.V."/>
            <person name="Simard J."/>
            <person name="Rommens J."/>
            <person name="Couch F."/>
            <person name="Shattuck-Eidens D."/>
            <person name="Neuhausen S."/>
            <person name="Merajver S."/>
            <person name="Thorlacius S."/>
            <person name="Offit K."/>
            <person name="Stoppa-Lyonnet D."/>
            <person name="Belanger C."/>
            <person name="Bell R."/>
            <person name="Berry S."/>
            <person name="Bogden R."/>
            <person name="Chen Q."/>
            <person name="Davis T."/>
            <person name="Dumont M."/>
            <person name="Frye C."/>
            <person name="Hattier T."/>
            <person name="Jammulapati S."/>
            <person name="Janecki T."/>
            <person name="Jiang P."/>
            <person name="Kehrer R."/>
            <person name="Leblanc J.-F."/>
            <person name="Mitchell J.T."/>
            <person name="McArthur-Morrison J."/>
            <person name="Nguyen K."/>
            <person name="Peng Y."/>
            <person name="Samson C."/>
            <person name="Schroeder M."/>
            <person name="Snyder S.C."/>
            <person name="Steele L."/>
            <person name="Stringfellow M."/>
            <person name="Stroup C."/>
            <person name="Swedlund B."/>
            <person name="Swensen J."/>
            <person name="Teng D."/>
            <person name="Thomas A."/>
            <person name="Tran T."/>
            <person name="Tran T."/>
            <person name="Tranchant M."/>
            <person name="Weaver-Feldhaus J."/>
            <person name="Wong A.K.C."/>
            <person name="Shizuya H."/>
            <person name="Eyfjord J.E."/>
            <person name="Cannon-Albright L."/>
            <person name="Labrie F."/>
            <person name="Skolnick M.H."/>
            <person name="Weber B."/>
            <person name="Kamb A."/>
            <person name="Goldar D.E."/>
        </authorList>
    </citation>
    <scope>NUCLEOTIDE SEQUENCE [MRNA]</scope>
    <scope>VARIANTS HIS-372 AND PHE-599</scope>
    <scope>VARIANT ALA-2466</scope>
</reference>
<reference key="3">
    <citation type="submission" date="2003-10" db="EMBL/GenBank/DDBJ databases">
        <authorList>
            <consortium name="NIEHS SNPs program"/>
        </authorList>
    </citation>
    <scope>NUCLEOTIDE SEQUENCE [GENOMIC DNA]</scope>
    <scope>VARIANTS HIS-289; GLN-322; HIS-372; VAL-784; SER-929; PHE-976; ILE-987; ASP-991; ASN-1561; LYS-1880; MET-1915; PHE-2138; ARG-2162; ARG-2440; ALA-2466; THR-2490; PRO-2835; ALA-2856; PHE-2944; THR-2951; ILE-3244 AND VAL-3412</scope>
</reference>
<reference key="4">
    <citation type="journal article" date="2004" name="Nature">
        <title>The DNA sequence and analysis of human chromosome 13.</title>
        <authorList>
            <person name="Dunham A."/>
            <person name="Matthews L.H."/>
            <person name="Burton J."/>
            <person name="Ashurst J.L."/>
            <person name="Howe K.L."/>
            <person name="Ashcroft K.J."/>
            <person name="Beare D.M."/>
            <person name="Burford D.C."/>
            <person name="Hunt S.E."/>
            <person name="Griffiths-Jones S."/>
            <person name="Jones M.C."/>
            <person name="Keenan S.J."/>
            <person name="Oliver K."/>
            <person name="Scott C.E."/>
            <person name="Ainscough R."/>
            <person name="Almeida J.P."/>
            <person name="Ambrose K.D."/>
            <person name="Andrews D.T."/>
            <person name="Ashwell R.I.S."/>
            <person name="Babbage A.K."/>
            <person name="Bagguley C.L."/>
            <person name="Bailey J."/>
            <person name="Bannerjee R."/>
            <person name="Barlow K.F."/>
            <person name="Bates K."/>
            <person name="Beasley H."/>
            <person name="Bird C.P."/>
            <person name="Bray-Allen S."/>
            <person name="Brown A.J."/>
            <person name="Brown J.Y."/>
            <person name="Burrill W."/>
            <person name="Carder C."/>
            <person name="Carter N.P."/>
            <person name="Chapman J.C."/>
            <person name="Clamp M.E."/>
            <person name="Clark S.Y."/>
            <person name="Clarke G."/>
            <person name="Clee C.M."/>
            <person name="Clegg S.C."/>
            <person name="Cobley V."/>
            <person name="Collins J.E."/>
            <person name="Corby N."/>
            <person name="Coville G.J."/>
            <person name="Deloukas P."/>
            <person name="Dhami P."/>
            <person name="Dunham I."/>
            <person name="Dunn M."/>
            <person name="Earthrowl M.E."/>
            <person name="Ellington A.G."/>
            <person name="Faulkner L."/>
            <person name="Frankish A.G."/>
            <person name="Frankland J."/>
            <person name="French L."/>
            <person name="Garner P."/>
            <person name="Garnett J."/>
            <person name="Gilbert J.G.R."/>
            <person name="Gilson C.J."/>
            <person name="Ghori J."/>
            <person name="Grafham D.V."/>
            <person name="Gribble S.M."/>
            <person name="Griffiths C."/>
            <person name="Hall R.E."/>
            <person name="Hammond S."/>
            <person name="Harley J.L."/>
            <person name="Hart E.A."/>
            <person name="Heath P.D."/>
            <person name="Howden P.J."/>
            <person name="Huckle E.J."/>
            <person name="Hunt P.J."/>
            <person name="Hunt A.R."/>
            <person name="Johnson C."/>
            <person name="Johnson D."/>
            <person name="Kay M."/>
            <person name="Kimberley A.M."/>
            <person name="King A."/>
            <person name="Laird G.K."/>
            <person name="Langford C.J."/>
            <person name="Lawlor S."/>
            <person name="Leongamornlert D.A."/>
            <person name="Lloyd D.M."/>
            <person name="Lloyd C."/>
            <person name="Loveland J.E."/>
            <person name="Lovell J."/>
            <person name="Martin S."/>
            <person name="Mashreghi-Mohammadi M."/>
            <person name="McLaren S.J."/>
            <person name="McMurray A."/>
            <person name="Milne S."/>
            <person name="Moore M.J.F."/>
            <person name="Nickerson T."/>
            <person name="Palmer S.A."/>
            <person name="Pearce A.V."/>
            <person name="Peck A.I."/>
            <person name="Pelan S."/>
            <person name="Phillimore B."/>
            <person name="Porter K.M."/>
            <person name="Rice C.M."/>
            <person name="Searle S."/>
            <person name="Sehra H.K."/>
            <person name="Shownkeen R."/>
            <person name="Skuce C.D."/>
            <person name="Smith M."/>
            <person name="Steward C.A."/>
            <person name="Sycamore N."/>
            <person name="Tester J."/>
            <person name="Thomas D.W."/>
            <person name="Tracey A."/>
            <person name="Tromans A."/>
            <person name="Tubby B."/>
            <person name="Wall M."/>
            <person name="Wallis J.M."/>
            <person name="West A.P."/>
            <person name="Whitehead S.L."/>
            <person name="Willey D.L."/>
            <person name="Wilming L."/>
            <person name="Wray P.W."/>
            <person name="Wright M.W."/>
            <person name="Young L."/>
            <person name="Coulson A."/>
            <person name="Durbin R.M."/>
            <person name="Hubbard T."/>
            <person name="Sulston J.E."/>
            <person name="Beck S."/>
            <person name="Bentley D.R."/>
            <person name="Rogers J."/>
            <person name="Ross M.T."/>
        </authorList>
    </citation>
    <scope>NUCLEOTIDE SEQUENCE [LARGE SCALE GENOMIC DNA]</scope>
    <scope>VARIANT ALA-2466</scope>
</reference>
<reference key="5">
    <citation type="journal article" date="1997" name="Nat. Genet.">
        <title>Germline BRCA2 6174delT mutations in Ashkenazi Jewish pancreatic cancer patients.</title>
        <authorList>
            <person name="Ozcelik H."/>
            <person name="Schmocker B."/>
            <person name="Di Nicola N."/>
            <person name="Shi X.H."/>
            <person name="Langer B."/>
            <person name="Moore M."/>
            <person name="Taylor B.R."/>
            <person name="Narod S.A."/>
            <person name="Darlington G."/>
            <person name="Andrulis I.L."/>
            <person name="Gallinger S."/>
            <person name="Redston M."/>
        </authorList>
    </citation>
    <scope>INVOLVEMENT IN PNCA2</scope>
</reference>
<reference key="6">
    <citation type="journal article" date="1999" name="Mol. Cell. Biol.">
        <title>Interaction between the product of the breast cancer susceptibility gene BRCA2 and DSS1, a protein functionally conserved from yeast to mammals.</title>
        <authorList>
            <person name="Marston N.J."/>
            <person name="Richards W.J."/>
            <person name="Hughes D."/>
            <person name="Bertwistle D."/>
            <person name="Marshall C.J."/>
            <person name="Ashworth A."/>
        </authorList>
    </citation>
    <scope>INTERACTION WITH SEM1</scope>
</reference>
<reference key="7">
    <citation type="journal article" date="2004" name="Hum. Mol. Genet.">
        <title>Direct interaction of FANCD2 with BRCA2 in DNA damage response pathways.</title>
        <authorList>
            <person name="Hussain S."/>
            <person name="Wilson J.B."/>
            <person name="Medhurst A.L."/>
            <person name="Hejna J."/>
            <person name="Witt E."/>
            <person name="Ananth S."/>
            <person name="Davies A."/>
            <person name="Masson J.-Y."/>
            <person name="Moses R."/>
            <person name="West S.C."/>
            <person name="de Winter J.P."/>
            <person name="Ashworth A."/>
            <person name="Jones N.J."/>
            <person name="Mathew C.G."/>
        </authorList>
    </citation>
    <scope>FUNCTION</scope>
    <scope>INTERACTION WITH FANCD2</scope>
</reference>
<reference key="8">
    <citation type="journal article" date="2004" name="Mol. Cell. Biol.">
        <title>Functional interaction of monoubiquitinated FANCD2 and BRCA2/FANCD1 in chromatin.</title>
        <authorList>
            <person name="Wang X.Z."/>
            <person name="Andreassen P.R."/>
            <person name="D'Andrea A.D."/>
        </authorList>
    </citation>
    <scope>FUNCTION</scope>
    <scope>PHOSPHORYLATION</scope>
    <scope>INTERACTION WITH FANCD2</scope>
</reference>
<reference key="9">
    <citation type="journal article" date="2004" name="Mol. Cell. Biol.">
        <title>BRCA2 is ubiquitinated in vivo and interacts with USP11, a deubiquitinating enzyme that exhibits prosurvival function in the cellular response to DNA damage.</title>
        <authorList>
            <person name="Schoenfeld A.R."/>
            <person name="Apgar S."/>
            <person name="Dolios G."/>
            <person name="Wang R."/>
            <person name="Aaronson S.A."/>
        </authorList>
    </citation>
    <scope>UBIQUITINATION</scope>
    <scope>DEUBIQUITINATION</scope>
    <scope>INTERACTION WITH USP11</scope>
</reference>
<reference key="10">
    <citation type="journal article" date="2005" name="J. Med. Genet.">
        <title>Biallelic BRCA2 mutations are associated with multiple malignancies in childhood including familial Wilms tumour.</title>
        <authorList>
            <consortium name="The famillial Wilms tumor collaboration"/>
            <person name="Reid S."/>
            <person name="Renwick A."/>
            <person name="Seal S."/>
            <person name="Baskcomb L."/>
            <person name="Barfoot R."/>
            <person name="Jayatilake H."/>
            <person name="Pritchard-Jones K."/>
            <person name="Stratton M.R."/>
            <person name="Ridolfi-Luethy A."/>
            <person name="Rahman N."/>
        </authorList>
    </citation>
    <scope>INVOLVEMENT IN GLM3</scope>
</reference>
<reference key="11">
    <citation type="journal article" date="2005" name="J. Biol. Chem.">
        <title>FANCD2 functions independently of BRCA2 and RAD51 associated homologous recombination in response to DNA damage.</title>
        <authorList>
            <person name="Ohashi A."/>
            <person name="Zdzienicka M.Z."/>
            <person name="Chen J."/>
            <person name="Couch F.J."/>
        </authorList>
    </citation>
    <scope>FUNCTION</scope>
</reference>
<reference key="12">
    <citation type="journal article" date="2005" name="Nature">
        <title>CDK-dependent phosphorylation of BRCA2 as a regulatory mechanism for recombinational repair.</title>
        <authorList>
            <person name="Esashi F."/>
            <person name="Christ N."/>
            <person name="Gannon J."/>
            <person name="Liu Y."/>
            <person name="Hunt T."/>
            <person name="Jasin M."/>
            <person name="West S.C."/>
        </authorList>
    </citation>
    <scope>PHOSPHORYLATION AT SER-3291 BY CDK2</scope>
    <scope>INTERACTION WITH RAD51</scope>
    <scope>MUTAGENESIS OF SER-3291</scope>
</reference>
<reference key="13">
    <citation type="journal article" date="2005" name="Neoplasia">
        <title>WDRPUH, a novel WD-repeat-containing protein, is highly expressed in human hepatocellular carcinoma and involved in cell proliferation.</title>
        <authorList>
            <person name="Silva F.P."/>
            <person name="Hamamoto R."/>
            <person name="Nakamura Y."/>
            <person name="Furukawa Y."/>
        </authorList>
    </citation>
    <scope>INTERACTION WITH WDR16</scope>
</reference>
<reference key="14">
    <citation type="journal article" date="2006" name="Mol. Cell">
        <title>Control of BRCA2 cellular and clinical functions by a nuclear partner, PALB2.</title>
        <authorList>
            <person name="Xia B."/>
            <person name="Sheng Q."/>
            <person name="Nakanishi K."/>
            <person name="Ohashi A."/>
            <person name="Wu J."/>
            <person name="Christ N."/>
            <person name="Liu X."/>
            <person name="Jasin M."/>
            <person name="Couch F.J."/>
            <person name="Livingston D.M."/>
        </authorList>
    </citation>
    <scope>INTERACTION WITH PALB2</scope>
    <scope>CHARACTERIZATION OF VARIANTS BC ARG-25; CYS-31 AND ARG-31</scope>
</reference>
<reference key="15">
    <citation type="journal article" date="2006" name="Oncogene">
        <title>DSS1 is required for the stability of BRCA2.</title>
        <authorList>
            <person name="Li J."/>
            <person name="Zou C."/>
            <person name="Bai Y."/>
            <person name="Wazer D.E."/>
            <person name="Band V."/>
            <person name="Gao Q."/>
        </authorList>
    </citation>
    <scope>INTERACTION WITH SEM1</scope>
</reference>
<reference key="16">
    <citation type="journal article" date="2007" name="Science">
        <title>ATM and ATR substrate analysis reveals extensive protein networks responsive to DNA damage.</title>
        <authorList>
            <person name="Matsuoka S."/>
            <person name="Ballif B.A."/>
            <person name="Smogorzewska A."/>
            <person name="McDonald E.R. III"/>
            <person name="Hurov K.E."/>
            <person name="Luo J."/>
            <person name="Bakalarski C.E."/>
            <person name="Zhao Z."/>
            <person name="Solimini N."/>
            <person name="Lerenthal Y."/>
            <person name="Shiloh Y."/>
            <person name="Gygi S.P."/>
            <person name="Elledge S.J."/>
        </authorList>
    </citation>
    <scope>PHOSPHORYLATION [LARGE SCALE ANALYSIS] AT SER-755</scope>
    <scope>IDENTIFICATION BY MASS SPECTROMETRY [LARGE SCALE ANALYSIS]</scope>
    <source>
        <tissue>Embryonic kidney</tissue>
    </source>
</reference>
<reference key="17">
    <citation type="journal article" date="2008" name="Oncogene">
        <title>FANCG promotes formation of a newly identified protein complex containing BRCA2, FANCD2 and XRCC3.</title>
        <authorList>
            <person name="Wilson J.B."/>
            <person name="Yamamoto K."/>
            <person name="Marriott A.S."/>
            <person name="Hussain S."/>
            <person name="Sung P."/>
            <person name="Hoatlin M.E."/>
            <person name="Mathew C.G."/>
            <person name="Takata M."/>
            <person name="Thompson L.H."/>
            <person name="Kupfer G.M."/>
            <person name="Jones N.J."/>
        </authorList>
    </citation>
    <scope>INTERACTION WITH FANCD2; FANCG AND XRCC3</scope>
</reference>
<reference key="18">
    <citation type="journal article" date="2008" name="Oncogene">
        <title>The checkpoint kinases Chk1 and Chk2 regulate the functional associations between hBRCA2 and Rad51 in response to DNA damage.</title>
        <authorList>
            <person name="Bahassi E.M."/>
            <person name="Ovesen J.L."/>
            <person name="Riesenberg A.L."/>
            <person name="Bernstein W.Z."/>
            <person name="Hasty P.E."/>
            <person name="Stambrook P.J."/>
        </authorList>
    </citation>
    <scope>FUNCTION IN RAD51-DEPENDENT DNA REPAIR</scope>
    <scope>PHOSPHORYLATION AT THR-3387 BY CHEK1 AND CHEK2</scope>
    <scope>MUTAGENESIS OF THR-3387</scope>
    <scope>INTERACTION WITH RAD51</scope>
</reference>
<reference key="19">
    <citation type="journal article" date="2009" name="Proc. Natl. Acad. Sci. U.S.A.">
        <title>PALB2 is an integral component of the BRCA complex required for homologous recombination repair.</title>
        <authorList>
            <person name="Sy S.M."/>
            <person name="Huen M.S."/>
            <person name="Chen J."/>
        </authorList>
    </citation>
    <scope>IDENTIFICATION BY MASS SPECTROMETRY</scope>
    <scope>IDENTIFICATION IN A BRCA COMPLEX WITH BRCA1 AND PALB2</scope>
</reference>
<reference key="20">
    <citation type="journal article" date="2010" name="Nat. Struct. Mol. Biol.">
        <title>Human BRCA2 protein promotes RAD51 filament formation on RPA-covered single-stranded DNA.</title>
        <authorList>
            <person name="Liu J."/>
            <person name="Doty T."/>
            <person name="Gibson B."/>
            <person name="Heyer W.D."/>
        </authorList>
    </citation>
    <scope>FUNCTION</scope>
    <scope>INTERACTION WITH RAD51</scope>
</reference>
<reference key="21">
    <citation type="journal article" date="2010" name="Nat. Struct. Mol. Biol.">
        <title>The breast cancer tumor suppressor BRCA2 promotes the specific targeting of RAD51 to single-stranded DNA.</title>
        <authorList>
            <person name="Thorslund T."/>
            <person name="McIlwraith M.J."/>
            <person name="Compton S.A."/>
            <person name="Lekomtsev S."/>
            <person name="Petronczki M."/>
            <person name="Griffith J.D."/>
            <person name="West S.C."/>
        </authorList>
    </citation>
    <scope>FUNCTION</scope>
    <scope>SUBUNIT</scope>
</reference>
<reference key="22">
    <citation type="journal article" date="2010" name="Nature">
        <title>Purified human BRCA2 stimulates RAD51-mediated recombination.</title>
        <authorList>
            <person name="Jensen R.B."/>
            <person name="Carreira A."/>
            <person name="Kowalczykowski S.C."/>
        </authorList>
    </citation>
    <scope>IDENTIFICATION BY MASS SPECTROMETRY</scope>
    <scope>FUNCTION</scope>
    <scope>INTERACTION WITH RAD51 AND DMC1</scope>
</reference>
<reference key="23">
    <citation type="journal article" date="2011" name="Cancer Res.">
        <title>BRCA2 and nucleophosmin coregulate centrosome amplification and form a complex with the Rho effector kinase ROCK2.</title>
        <authorList>
            <person name="Wang H.F."/>
            <person name="Takenaka K."/>
            <person name="Nakanishi A."/>
            <person name="Miki Y."/>
        </authorList>
    </citation>
    <scope>FUNCTION</scope>
    <scope>INTERACTION WITH ROCK2 AND NPM1</scope>
</reference>
<reference key="24">
    <citation type="journal article" date="2011" name="Exp. Cell Res.">
        <title>Homologous recombination proteins are associated with centrosomes and are required for mitotic stability.</title>
        <authorList>
            <person name="Cappelli E."/>
            <person name="Townsend S."/>
            <person name="Griffin C."/>
            <person name="Thacker J."/>
        </authorList>
    </citation>
    <scope>SUBCELLULAR LOCATION</scope>
</reference>
<reference key="25">
    <citation type="journal article" date="2013" name="J. Proteome Res.">
        <title>Toward a comprehensive characterization of a human cancer cell phosphoproteome.</title>
        <authorList>
            <person name="Zhou H."/>
            <person name="Di Palma S."/>
            <person name="Preisinger C."/>
            <person name="Peng M."/>
            <person name="Polat A.N."/>
            <person name="Heck A.J."/>
            <person name="Mohammed S."/>
        </authorList>
    </citation>
    <scope>PHOSPHORYLATION [LARGE SCALE ANALYSIS] AT SER-70; SER-445; SER-492; SER-1970; THR-2035; SER-2095 AND SER-3319</scope>
    <scope>IDENTIFICATION BY MASS SPECTROMETRY [LARGE SCALE ANALYSIS]</scope>
    <source>
        <tissue>Cervix carcinoma</tissue>
        <tissue>Erythroleukemia</tissue>
    </source>
</reference>
<reference key="26">
    <citation type="journal article" date="2013" name="Nat. Struct. Mol. Biol.">
        <title>A cancer-associated BRCA2 mutation reveals masked nuclear export signals controlling localization.</title>
        <authorList>
            <person name="Jeyasekharan A.D."/>
            <person name="Liu Y."/>
            <person name="Hattori H."/>
            <person name="Pisupati V."/>
            <person name="Jonsdottir A.B."/>
            <person name="Rajendra E."/>
            <person name="Lee M."/>
            <person name="Sundaramoorthy E."/>
            <person name="Schlachter S."/>
            <person name="Kaminski C.F."/>
            <person name="Ofir-Rosenfeld Y."/>
            <person name="Sato K."/>
            <person name="Savill J."/>
            <person name="Ayoub N."/>
            <person name="Venkitaraman A.R."/>
        </authorList>
    </citation>
    <scope>INTERACTION WITH SEM1</scope>
    <scope>CHARACTERIZATION OF VARIANT BC HIS-2723</scope>
    <scope>MUTAGENESIS OF TRP-2725</scope>
    <scope>NUCLEAR EXPORT SIGNAL</scope>
    <scope>SUBCELLULAR LOCATION</scope>
</reference>
<reference key="27">
    <citation type="journal article" date="2014" name="Oncogene">
        <title>Breast cancer-associated missense mutants of the PALB2 WD40 domain, which directly binds RAD51C, RAD51 and BRCA2, disrupt DNA repair.</title>
        <authorList>
            <person name="Park J.Y."/>
            <person name="Singh T.R."/>
            <person name="Nassar N."/>
            <person name="Zhang F."/>
            <person name="Freund M."/>
            <person name="Hanenberg H."/>
            <person name="Meetei A.R."/>
            <person name="Andreassen P.R."/>
        </authorList>
    </citation>
    <scope>INTERACTION WITH PALB2</scope>
    <scope>IDENTIFICATION IN A PALB2-CONTAINING HR COMPLEX</scope>
</reference>
<reference key="28">
    <citation type="journal article" date="2014" name="Cell Rep.">
        <title>Breast cancer proteins PALB2 and BRCA2 stimulate polymerase eta in recombination-associated DNA synthesis at blocked replication forks.</title>
        <authorList>
            <person name="Buisson R."/>
            <person name="Niraj J."/>
            <person name="Pauty J."/>
            <person name="Maity R."/>
            <person name="Zhao W."/>
            <person name="Coulombe Y."/>
            <person name="Sung P."/>
            <person name="Masson J.Y."/>
        </authorList>
    </citation>
    <scope>FUNCTION</scope>
    <scope>INTERACTION WITH POLH</scope>
</reference>
<reference key="29">
    <citation type="journal article" date="2014" name="Nature">
        <title>BRCA2 prevents R-loop accumulation and associates with TREX-2 mRNA export factor PCID2.</title>
        <authorList>
            <person name="Bhatia V."/>
            <person name="Barroso S.I."/>
            <person name="Garcia-Rubio M.L."/>
            <person name="Tumini E."/>
            <person name="Herrera-Moyano E."/>
            <person name="Aguilera A."/>
        </authorList>
    </citation>
    <scope>FUNCTION IN R-LOOP PROCESSING</scope>
    <scope>INTERACTION WITH SEM1 AND PCID2</scope>
</reference>
<reference key="30">
    <citation type="journal article" date="2016" name="Mol. Cell">
        <title>Non-catalytic Roles for XPG with BRCA1 and BRCA2 in Homologous Recombination and Genome Stability.</title>
        <authorList>
            <person name="Trego K.S."/>
            <person name="Groesser T."/>
            <person name="Davalos A.R."/>
            <person name="Parplys A.C."/>
            <person name="Zhao W."/>
            <person name="Nelson M.R."/>
            <person name="Hlaing A."/>
            <person name="Shih B."/>
            <person name="Rydberg B."/>
            <person name="Pluth J.M."/>
            <person name="Tsai M.S."/>
            <person name="Hoeijmakers J.H.J."/>
            <person name="Sung P."/>
            <person name="Wiese C."/>
            <person name="Campisi J."/>
            <person name="Cooper P.K."/>
        </authorList>
    </citation>
    <scope>IDENTIFICATION IN THE HR COMPLEX</scope>
    <scope>INTERACTION WITH ERCC5 AND PALB2</scope>
    <scope>SUBCELLULAR LOCATION</scope>
</reference>
<reference key="31">
    <citation type="journal article" date="2017" name="Oncogene">
        <title>Compromised BRCA1-PALB2 interaction is associated with breast cancer risk.</title>
        <authorList>
            <person name="Foo T.K."/>
            <person name="Tischkowitz M."/>
            <person name="Simhadri S."/>
            <person name="Boshari T."/>
            <person name="Zayed N."/>
            <person name="Burke K.A."/>
            <person name="Berman S.H."/>
            <person name="Blecua P."/>
            <person name="Riaz N."/>
            <person name="Huo Y."/>
            <person name="Ding Y.C."/>
            <person name="Neuhausen S.L."/>
            <person name="Weigelt B."/>
            <person name="Reis-Filho J.S."/>
            <person name="Foulkes W.D."/>
            <person name="Xia B."/>
        </authorList>
    </citation>
    <scope>INTERACTION WITH PALB2</scope>
</reference>
<reference key="32">
    <citation type="journal article" date="2019" name="Cell Rep.">
        <title>HSF2BP Interacts with a Conserved Domain of BRCA2 and Is Required for Mouse Spermatogenesis.</title>
        <authorList>
            <person name="Brandsma I."/>
            <person name="Sato K."/>
            <person name="van Rossum-Fikkert S.E."/>
            <person name="van Vliet N."/>
            <person name="Sleddens E."/>
            <person name="Reuter M."/>
            <person name="Odijk H."/>
            <person name="van den Tempel N."/>
            <person name="Dekkers D.H.W."/>
            <person name="Bezstarosti K."/>
            <person name="Demmers J.A.A."/>
            <person name="Maas A."/>
            <person name="Lebbink J."/>
            <person name="Wyman C."/>
            <person name="Essers J."/>
            <person name="van Gent D.C."/>
            <person name="Baarends W.M."/>
            <person name="Knipscheer P."/>
            <person name="Kanaar R."/>
            <person name="Zelensky A.N."/>
        </authorList>
    </citation>
    <scope>INTERACTION WITH HSF2BP</scope>
</reference>
<reference key="33">
    <citation type="journal article" date="2002" name="Nature">
        <title>Insights into DNA recombination from the structure of a RAD51-BRCA2 complex.</title>
        <authorList>
            <person name="Pellegrini L."/>
            <person name="Yu D.S."/>
            <person name="Lo T."/>
            <person name="Anand S."/>
            <person name="Lee M."/>
            <person name="Blundell T.L."/>
            <person name="Venkitaraman A.R."/>
        </authorList>
    </citation>
    <scope>X-RAY CRYSTALLOGRAPHY (1.7 ANGSTROMS) OF 1519-1551 IN COMPLEX WITH RAD51</scope>
</reference>
<reference key="34">
    <citation type="journal article" date="2009" name="EMBO Rep.">
        <title>Structural basis for recruitment of BRCA2 by PALB2.</title>
        <authorList>
            <person name="Oliver A.W."/>
            <person name="Swift S."/>
            <person name="Lord C.J."/>
            <person name="Ashworth A."/>
            <person name="Pearl L.H."/>
        </authorList>
    </citation>
    <scope>X-RAY CRYSTALLOGRAPHY (2.2 ANGSTROMS) OF 21-39 IN COMPLEX WITH PALB2</scope>
</reference>
<reference key="35">
    <citation type="journal article" date="1996" name="Cancer Res.">
        <title>Mutations of the BRCA2 gene in ovarian carcinomas.</title>
        <authorList>
            <person name="Takahashi H."/>
            <person name="Chiu H.-C."/>
            <person name="Bandera C.A."/>
            <person name="Behbakht K."/>
            <person name="Liu P.C."/>
            <person name="Couch F.J."/>
            <person name="Weber B.L."/>
            <person name="LiVolsi V.A."/>
            <person name="Furusato M."/>
            <person name="Rebane B.A."/>
            <person name="Cardonick A."/>
            <person name="Benjamin I."/>
            <person name="Morgan M.A."/>
            <person name="King S.A."/>
            <person name="Mikuta J.J."/>
            <person name="Rubin S.C."/>
            <person name="Boyd J."/>
        </authorList>
    </citation>
    <scope>VARIANT OVARIAN CANCER HIS-2787</scope>
    <scope>VARIANTS HIS-372; MET-1915 AND ALA-2466</scope>
</reference>
<reference key="36">
    <citation type="journal article" date="1996" name="Nat. Genet.">
        <title>BRCA2 germline mutations in male breast cancer cases and breast cancer families.</title>
        <authorList>
            <person name="Couch F.J."/>
            <person name="Farid L.M."/>
            <person name="Deshano M.L."/>
            <person name="Tavtigian S.V."/>
            <person name="Calzone K."/>
            <person name="Campeau L."/>
            <person name="Peng Y."/>
            <person name="Bogden B."/>
            <person name="Chen Q."/>
            <person name="Neuhausen S."/>
            <person name="Shattuck-Eidens D."/>
            <person name="Godwin A.K."/>
            <person name="Daly M."/>
            <person name="Radford D.M."/>
            <person name="Sedlacek S."/>
            <person name="Rommens J."/>
            <person name="Simard J."/>
            <person name="Garber J."/>
            <person name="Merajver S."/>
            <person name="Weber B.L."/>
        </authorList>
    </citation>
    <scope>VARIANTS HIS-372; ASP-991; SER-1147; MET-1915 AND CYS-2034</scope>
</reference>
<reference key="37">
    <citation type="journal article" date="1996" name="Nat. Genet.">
        <title>BRCA2 mutations in primary breast and ovarian cancers.</title>
        <authorList>
            <person name="Lancaster J.M."/>
            <person name="Wooster R."/>
            <person name="Mangion J."/>
            <person name="Phelan C.M."/>
            <person name="Cochran C."/>
            <person name="Gumbs C."/>
            <person name="Seal S."/>
            <person name="Barfoot R."/>
            <person name="Collins N."/>
            <person name="Bignell G."/>
            <person name="Patel S."/>
            <person name="Hamoudi R."/>
            <person name="Larsson C."/>
            <person name="Wiseman R.W."/>
            <person name="Berchuck A."/>
            <person name="Iglehart J.D."/>
            <person name="Marks J.R."/>
            <person name="Ashworth A."/>
            <person name="Stratton M.R."/>
            <person name="Futreal P.A."/>
        </authorList>
    </citation>
    <scope>VARIANT GLU-3095</scope>
</reference>
<reference key="38">
    <citation type="journal article" date="1996" name="Nat. Genet.">
        <title>Low incidence of BRCA2 mutations in breast carcinoma and other cancers.</title>
        <authorList>
            <person name="Teng D.H.-F."/>
            <person name="Bogden R."/>
            <person name="Mitchell J."/>
            <person name="Baumgard M."/>
            <person name="Bell R."/>
            <person name="Berry S."/>
            <person name="Davis T."/>
            <person name="Ha P.C."/>
            <person name="Kehrer R."/>
            <person name="Jammulapati S."/>
            <person name="Chen Q."/>
            <person name="Offit K."/>
            <person name="Skolnick M.H."/>
            <person name="Tavtigian S.V."/>
            <person name="Jhanwar S."/>
            <person name="Swedlund B."/>
            <person name="Wong A.K.C."/>
            <person name="Kamb A."/>
        </authorList>
    </citation>
    <scope>VARIANTS</scope>
</reference>
<reference key="39">
    <citation type="journal article" date="1996" name="Nat. Genet.">
        <title>Mutation analysis in the BRCA2 gene in primary breast cancers.</title>
        <authorList>
            <person name="Miki Y."/>
            <person name="Katagiri T."/>
            <person name="Kasumi F."/>
            <person name="Yoshimoto T."/>
            <person name="Nakamura Y."/>
        </authorList>
    </citation>
    <scope>VARIANT BC ASN-2415</scope>
</reference>
<reference key="40">
    <citation type="journal article" date="1997" name="Am. J. Hum. Genet.">
        <title>A low proportion of BRCA2 mutations in Finnish breast cancer families.</title>
        <authorList>
            <person name="Vehmanen P."/>
            <person name="Friedman L.S."/>
            <person name="Eerola H."/>
            <person name="Sarantaus L."/>
            <person name="Pyrhoenen S."/>
            <person name="Ponder B.A.J."/>
            <person name="Muhonen T."/>
            <person name="Nevanlinna H."/>
        </authorList>
    </citation>
    <scope>VARIANT BC ASP-2089</scope>
    <scope>VARIANT VAL-3412</scope>
</reference>
<reference key="41">
    <citation type="journal article" date="1998" name="Hum. Genet.">
        <title>High throughput fluorescence-based conformation-sensitive gel electrophoresis (F-CSGE) identifies six unique BRCA2 mutations and an overall low incidence of BRCA2 mutations in high-risk BRCA1-negative breast cancer families.</title>
        <authorList>
            <person name="Ganguly T."/>
            <person name="Dhulipala R."/>
            <person name="Godmilow L."/>
            <person name="Ganguly A."/>
        </authorList>
    </citation>
    <scope>VARIANT BC/PANCREAS CANCER TRP-554</scope>
</reference>
<reference key="42">
    <citation type="journal article" date="1998" name="J. Hum. Genet.">
        <title>High proportion of missense mutations of the BRCA1 and BRCA2 genes in Japanese breast cancer families.</title>
        <authorList>
            <person name="Katagiri T."/>
            <person name="Kasumi F."/>
            <person name="Yoshimoto M."/>
            <person name="Nomizu T."/>
            <person name="Asaishi K."/>
            <person name="Abe R."/>
            <person name="Tsuchiya A."/>
            <person name="Sugano M."/>
            <person name="Takai S."/>
            <person name="Yoneda M."/>
            <person name="Fukutomi T."/>
            <person name="Nanba K."/>
            <person name="Makita M."/>
            <person name="Okazaki H."/>
            <person name="Hirata K."/>
            <person name="Okazaki M."/>
            <person name="Furutsuma Y."/>
            <person name="Morishita Y."/>
            <person name="Iino Y."/>
            <person name="Karino T."/>
            <person name="Ayabe H."/>
            <person name="Hara S."/>
            <person name="Kajiwara T."/>
            <person name="Houga S."/>
            <person name="Shimizu T."/>
            <person name="Toda M."/>
            <person name="Yamazaki Y."/>
            <person name="Uchida T."/>
            <person name="Kunitomo K."/>
            <person name="Sonoo H."/>
            <person name="Kurebayashi J."/>
            <person name="Shimotsuma K."/>
            <person name="Nakamura Y."/>
            <person name="Miki Y."/>
        </authorList>
    </citation>
    <scope>VARIANTS BC LEU-32; ARG-53; LEU-81; ARG-201; ALA-211; SER-222 AND THR-3118</scope>
</reference>
<reference key="43">
    <citation type="journal article" date="1999" name="Am. J. Hum. Genet.">
        <title>The contribution of germline BRCA1 and BRCA2 mutations to familial ovarian cancer: no evidence for other ovarian cancer-susceptibility genes.</title>
        <authorList>
            <person name="Gayther S.A."/>
            <person name="Russell P."/>
            <person name="Harrington P."/>
            <person name="Antoniou A.C."/>
            <person name="Easton D.F."/>
            <person name="Ponder B.A.J."/>
        </authorList>
    </citation>
    <scope>VARIANTS OVARIAN CANCER PRO-75; HIS-2502 AND HIS-3098</scope>
</reference>
<reference key="44">
    <citation type="journal article" date="1999" name="Hum. Genet.">
        <title>Molecular characterization of germline mutations in the BRCA1 and BRCA2 genes from breast cancer families in Taiwan.</title>
        <authorList>
            <person name="Li S.S.-L."/>
            <person name="Tseng H.-M."/>
            <person name="Yang T.-P."/>
            <person name="Liu C.-H."/>
            <person name="Teng S.-J."/>
            <person name="Huang H.-W."/>
            <person name="Chen L.-M."/>
            <person name="Kao H.-W."/>
            <person name="Chen J.H."/>
            <person name="Tseng J.-N."/>
            <person name="Chen A."/>
            <person name="Hou M.-F."/>
            <person name="Huang T.-J."/>
            <person name="Chang H.-T."/>
            <person name="Mok K.-T."/>
            <person name="Tsai J.-H."/>
        </authorList>
    </citation>
    <scope>VARIANTS HIS-289; HIS-372; ASP-991 AND VAL-3412</scope>
</reference>
<reference key="45">
    <citation type="journal article" date="1999" name="Hum. Mol. Genet.">
        <title>Global sequence diversity of BRCA2: analysis of 71 breast cancer families and 95 control individuals of worldwide populations.</title>
        <authorList>
            <person name="Wagner T.M.U."/>
            <person name="Hirtenlehner K."/>
            <person name="Shen P."/>
            <person name="Moeslinger R."/>
            <person name="Muhr D."/>
            <person name="Fleischmann E."/>
            <person name="Concin H."/>
            <person name="Doeller W."/>
            <person name="Haid A."/>
            <person name="Lang A.H."/>
            <person name="Mayer P."/>
            <person name="Petru E."/>
            <person name="Ropp E."/>
            <person name="Langbauer G."/>
            <person name="Kubista E."/>
            <person name="Scheiner O."/>
            <person name="Underhill P."/>
            <person name="Mountain J."/>
            <person name="Stierer M."/>
            <person name="Zielinski C."/>
            <person name="Oefner P."/>
        </authorList>
    </citation>
    <scope>VARIANTS BC GLU-327 AND ASN-935</scope>
    <scope>VARIANTS</scope>
</reference>
<reference key="46">
    <citation type="journal article" date="1999" name="Int. J. Cancer">
        <title>Germline brca2 sequence variants in patients with ocular melanoma.</title>
        <authorList>
            <person name="Sinilnikova O.M."/>
            <person name="Egan K.M."/>
            <person name="Quinn J.L."/>
            <person name="Boutrand L."/>
            <person name="Lenoir G.M."/>
            <person name="Stoppa-Lyonnet D."/>
            <person name="Desjardins L."/>
            <person name="Levy C."/>
            <person name="Goldgar D."/>
            <person name="Gragoudas E.S."/>
        </authorList>
    </citation>
    <scope>VARIANT BC ARG-326</scope>
    <scope>VARIANT ILE-2728</scope>
</reference>
<reference key="47">
    <citation type="journal article" date="2000" name="Nat. Genet.">
        <title>A common variant in BRCA2 is associated with both breast cancer risk and prenatal viability.</title>
        <authorList>
            <person name="Healey C.S."/>
            <person name="Dunning A.M."/>
            <person name="Teare M.D."/>
            <person name="Chase D."/>
            <person name="Parker L."/>
            <person name="Burn J."/>
            <person name="Chang-Claude J."/>
            <person name="Mannermaa A."/>
            <person name="Kataja V."/>
            <person name="Huntsman D.G."/>
            <person name="Pharoah P.D.P."/>
            <person name="Luben R.N."/>
            <person name="Easton D.F."/>
            <person name="Ponder B.A.J."/>
        </authorList>
    </citation>
    <scope>VARIANT HIS-372</scope>
</reference>
<reference key="48">
    <citation type="journal article" date="2000" name="J. Med. Genet.">
        <title>BRCA2 germline mutations among early onset breast cancer patients unselected for family history of the disease.</title>
        <authorList>
            <person name="Plaschke J."/>
            <person name="Commer T."/>
            <person name="Jacobi C."/>
            <person name="Schackert H.K."/>
            <person name="Chang-Claude J."/>
        </authorList>
    </citation>
    <scope>VARIANTS BC MET-729; ILE-2515 AND ILE-2728</scope>
    <scope>VARIANTS HIS-289; HIS-372; ASP-991; MET-1915 AND VAL-3412</scope>
</reference>
<reference key="49">
    <citation type="journal article" date="2001" name="Hum. Mutat.">
        <title>BRCA2 germline mutations in male breast cancer patients in the Polish population.</title>
        <authorList>
            <person name="Kwiatkowska E."/>
            <person name="Teresiak M."/>
            <person name="Lamperska K.M."/>
            <person name="Karczewska A."/>
            <person name="Breborowicz D."/>
            <person name="Stawicka M."/>
            <person name="Godlewski D."/>
            <person name="Krzyzosiak W.J."/>
            <person name="Mackiewicz A."/>
        </authorList>
    </citation>
    <scope>VARIANTS BC ASN-1179; ILE-3124 AND GLU-3196</scope>
    <scope>VARIANT TYR-1420</scope>
</reference>
<reference key="50">
    <citation type="journal article" date="2001" name="Hum. Mutat.">
        <title>An improved high throughput heteroduplex mutation detection system for screening BRCA2 mutations-fluorescent mutation detection (F-MD).</title>
        <authorList>
            <person name="Edwards S.M."/>
            <person name="Kote-Jarai Z."/>
            <person name="Hamoudi R."/>
            <person name="Eeles R.A."/>
        </authorList>
    </citation>
    <scope>VARIANTS BC THR-505; TYR-1730; HIS-2135 AND CYS-2222</scope>
    <scope>VARIANT LYS-1880</scope>
</reference>
<reference key="51">
    <citation type="journal article" date="2001" name="Int. J. Cancer">
        <title>Frequency of BRCA1 and BRCA2 germline mutations in Japanese breast cancer families.</title>
        <authorList>
            <person name="Ikeda N."/>
            <person name="Miyoshi Y."/>
            <person name="Yoneda K."/>
            <person name="Shiba E."/>
            <person name="Sekihara Y."/>
            <person name="Kinoshita M."/>
            <person name="Noguchi S."/>
        </authorList>
    </citation>
    <scope>VARIANTS HIS-289 AND VAL-784</scope>
    <scope>VARIANT BC GLU-3076</scope>
</reference>
<reference key="52">
    <citation type="journal article" date="2002" name="Am. J. Hum. Genet.">
        <title>BRCA2 T2722R is a deleterious allele that causes exon skipping.</title>
        <authorList>
            <person name="Fackenthal J.D."/>
            <person name="Cartegni L."/>
            <person name="Krainer A.R."/>
            <person name="Olopade O.I."/>
        </authorList>
    </citation>
    <scope>VARIANT BC ARG-2722</scope>
</reference>
<reference key="53">
    <citation type="journal article" date="2002" name="Am. J. Hum. Genet.">
        <authorList>
            <person name="Fackenthal J.D."/>
            <person name="Cartegni L."/>
            <person name="Krainer A.R."/>
            <person name="Olopade O.I."/>
        </authorList>
    </citation>
    <scope>ERRATUM OF PUBMED:12145750</scope>
</reference>
<reference key="54">
    <citation type="journal article" date="2002" name="Br. J. Cancer">
        <title>BRCA2 gene mutations in families with aggregations of breast and stomach cancers.</title>
        <authorList>
            <person name="Jakubowska A."/>
            <person name="Nej K."/>
            <person name="Huzarski T."/>
            <person name="Scott R.J."/>
            <person name="Lubinski J."/>
        </authorList>
    </citation>
    <scope>VARIANTS BC CYS-2072; CYS-2094 AND ASN-2128</scope>
</reference>
<reference key="55">
    <citation type="journal article" date="2002" name="Cancer Res.">
        <title>Evaluation of candidate genes MAP2K4, MADH4, ACVR1B, and BRCA2 in familial pancreatic cancer: deleterious BRCA2 mutations in 17%.</title>
        <authorList>
            <person name="Murphy K.M."/>
            <person name="Brune K.A."/>
            <person name="Griffin C."/>
            <person name="Sollenberger J.E."/>
            <person name="Petersen G.M."/>
            <person name="Bansal R."/>
            <person name="Hruban R.H."/>
            <person name="Kern S.E."/>
        </authorList>
    </citation>
    <scope>VARIANT THR-192</scope>
</reference>
<reference key="56">
    <citation type="journal article" date="2002" name="Clin. Cancer Res.">
        <title>Infrequent mutation in the BRCA2 gene in esophageal squamous cell carcinoma.</title>
        <authorList>
            <person name="Hu N."/>
            <person name="Li G."/>
            <person name="Li W.-J."/>
            <person name="Wang C."/>
            <person name="Goldstein A.M."/>
            <person name="Tang Z.-Z."/>
            <person name="Roth M.J."/>
            <person name="Dawsey S.M."/>
            <person name="Huang J."/>
            <person name="Wang Q.-H."/>
            <person name="Ding T."/>
            <person name="Giffen C."/>
            <person name="Taylor P.R."/>
            <person name="Emmert-Buck M.R."/>
        </authorList>
    </citation>
    <scope>VARIANTS HIS-118; SER-315; ILE-1988; CYS-2842 AND SER-3300</scope>
</reference>
<reference key="57">
    <citation type="journal article" date="2002" name="Genet. Test.">
        <title>Characterization of common BRCA1 and BRCA2 variants.</title>
        <authorList>
            <person name="Deffenbaugh A.M."/>
            <person name="Frank T.S."/>
            <person name="Hoffman M."/>
            <person name="Cannon-Albright L."/>
            <person name="Neuhausen S.L."/>
        </authorList>
    </citation>
    <scope>VARIANTS ALA-598; TYR-1420; CYS-2034; ILE-2728 AND THR-2951</scope>
</reference>
<reference key="58">
    <citation type="journal article" date="2002" name="Hum. Mutat.">
        <title>BRCA1 and BRCA2 in Indian breast cancer patients.</title>
        <authorList>
            <person name="Saxena S."/>
            <person name="Szabo C.I."/>
            <person name="Chopin S."/>
            <person name="Barjhoux L."/>
            <person name="Sinilnikova O."/>
            <person name="Lenoir G."/>
            <person name="Goldgar D.E."/>
            <person name="Bhatanager D."/>
        </authorList>
    </citation>
    <scope>VARIANTS ASP-1593 AND SER-2706</scope>
</reference>
<reference key="59">
    <citation type="journal article" date="2002" name="Hum. Mutat.">
        <title>BRCA1 and BRCA2 sequence variants in Chinese breast cancer families.</title>
        <authorList>
            <person name="Zhi X."/>
            <person name="Szabo C."/>
            <person name="Chopin S."/>
            <person name="Suter N."/>
            <person name="Wang Q.-S."/>
            <person name="Ostrander E.A."/>
            <person name="Sinilnikova O.M."/>
            <person name="Lenoir G.M."/>
            <person name="Goldgar D."/>
            <person name="Shi Y.-R."/>
        </authorList>
    </citation>
    <scope>VARIANT BC ASN-2729</scope>
    <scope>VARIANT VAL-3412</scope>
</reference>
<reference key="60">
    <citation type="journal article" date="2002" name="Hum. Mutat.">
        <title>BRCA1 and BRCA2 mutation analysis of early-onset and familial breast cancer cases in Mexico.</title>
        <authorList>
            <person name="Ruiz-Flores P."/>
            <person name="Sinilnikova O.M."/>
            <person name="Badzioch M."/>
            <person name="Calderon-Garciduenas A.L."/>
            <person name="Chopin S."/>
            <person name="Fabrice O."/>
            <person name="Gonzalez-Guerrero J.F."/>
            <person name="Szabo C."/>
            <person name="Lenoir G."/>
            <person name="Goldgar D.E."/>
            <person name="Barrera-Saldana H.A."/>
        </authorList>
    </citation>
    <scope>VARIANTS BC CYS-42; ARG-613; LEU-2118; LEU-2293 AND ARG-2793</scope>
    <scope>VARIANT ILE-3374</scope>
</reference>
<reference key="61">
    <citation type="journal article" date="2002" name="Int. J. Cancer">
        <title>Somatic mutations in the BRCA2 gene and high frequency of allelic loss of BRCA2 in sporadic male breast cancer.</title>
        <authorList>
            <person name="Kwiatkowska E."/>
            <person name="Teresiak M."/>
            <person name="Breborowicz D."/>
            <person name="Mackiewicz A."/>
        </authorList>
    </citation>
    <scope>VARIANTS BC TYR-1580 AND MET-1915</scope>
</reference>
<reference key="62">
    <citation type="journal article" date="2002" name="Science">
        <title>Biallelic inactivation of BRCA2 in Fanconi anemia.</title>
        <authorList>
            <person name="Howlett N.G."/>
            <person name="Taniguchi T."/>
            <person name="Olson S."/>
            <person name="Cox B."/>
            <person name="Waisfisz Q."/>
            <person name="de Die-Smulders C."/>
            <person name="Persky N."/>
            <person name="Grompe M."/>
            <person name="Joenje H."/>
            <person name="Pals G."/>
            <person name="Ikeda H."/>
            <person name="Fox E.A."/>
            <person name="D'Andrea A.D."/>
        </authorList>
    </citation>
    <scope>INVOLVEMENT IN FANCD1</scope>
</reference>
<reference key="63">
    <citation type="journal article" date="2003" name="Hum. Mutat.">
        <title>BRCA2 germline mutations in Cypriot patients with familial breast/ovarian cancer.</title>
        <authorList>
            <person name="Hadjisavvas A."/>
            <person name="Charalambous E."/>
            <person name="Adamou A."/>
            <person name="Christodoulou C.G."/>
            <person name="Kyriacou K."/>
        </authorList>
    </citation>
    <scope>VARIANTS HIS-289; HIS-372; GLY-462; ASP-991; SER-1279; TYR-1420; ASP-1771 AND ALA-2466</scope>
</reference>
<reference key="64">
    <citation type="journal article" date="2003" name="Hum. Mutat.">
        <title>Twenty-three novel BRCA1 and BRCA2 sequence alterations in breast and/or ovarian cancer families in Southern Germany.</title>
        <authorList>
            <person name="Meyer P."/>
            <person name="Voigtlaender T."/>
            <person name="Bartram C.R."/>
            <person name="Klaes R."/>
        </authorList>
    </citation>
    <scope>VARIANTS BC ILE-431; LYS-1036; ARG-1106 AND VAL-1524</scope>
</reference>
<reference key="65">
    <citation type="journal article" date="2003" name="J. Hum. Genet.">
        <title>Evaluation of the diagnostic accuracy of the stop codon (SC) assay for identifying protein-truncating mutations in the BRCA1and BRCA2genes in familial breast cancer.</title>
        <authorList>
            <person name="Sakayori M."/>
            <person name="Kawahara M."/>
            <person name="Shiraishi K."/>
            <person name="Nomizu T."/>
            <person name="Shimada A."/>
            <person name="Kudo T."/>
            <person name="Abe R."/>
            <person name="Ohuchi N."/>
            <person name="Takenoshita S."/>
            <person name="Kanamaru R."/>
            <person name="Ishioka C."/>
        </authorList>
    </citation>
    <scope>VARIANTS PRO-582; PHE-1522 AND VAL-2044</scope>
</reference>
<reference key="66">
    <citation type="journal article" date="2003" name="J. Natl. Cancer Inst.">
        <title>BRCA2 germline mutations in familial pancreatic carcinoma.</title>
        <authorList>
            <person name="Hahn S.A."/>
            <person name="Greenhalf B."/>
            <person name="Ellis I."/>
            <person name="Sina-Frey M."/>
            <person name="Rieder H."/>
            <person name="Korte B."/>
            <person name="Gerdes B."/>
            <person name="Kress R."/>
            <person name="Ziegler A."/>
            <person name="Raeburn J.A."/>
            <person name="Campra D."/>
            <person name="Gruetzmann R."/>
            <person name="Rehder H."/>
            <person name="Rothmund M."/>
            <person name="Schmiegel W."/>
            <person name="Neoptolemos J.P."/>
            <person name="Bartsch D.K."/>
        </authorList>
    </citation>
    <scope>VARIANT CYS-2034</scope>
    <scope>VARIANT BC GLU-3076</scope>
</reference>
<reference key="67">
    <citation type="journal article" date="2004" name="Blood">
        <title>Association of biallelic BRCA2/FANCD1 mutations with spontaneous chromosomal instability and solid tumors of childhood.</title>
        <authorList>
            <person name="Hirsch B."/>
            <person name="Shimamura A."/>
            <person name="Moreau L."/>
            <person name="Baldinger S."/>
            <person name="Hag-alshiekh M."/>
            <person name="Bostrom B."/>
            <person name="Sencer S."/>
            <person name="D'Andrea A.D."/>
        </authorList>
    </citation>
    <scope>VARIANT FANCD1 PRO-2510</scope>
</reference>
<reference key="68">
    <citation type="journal article" date="2004" name="Br. J. Cancer">
        <title>BRCA1 and BRCA2 germline mutation spectrum and frequencies in Belgian breast/ovarian cancer families.</title>
        <authorList>
            <person name="Claes K."/>
            <person name="Poppe B."/>
            <person name="Coene I."/>
            <person name="De Paepe A."/>
            <person name="Messiaen L."/>
        </authorList>
    </citation>
    <scope>VARIANTS BC SER-60; ARG-405; HIS-448; GLY-462; GLY-2275; ARG-2353; LYS-2488; HIS-2723; ASN-2950; ILE-3013 AND HIS-3098</scope>
    <scope>VARIANTS ASP-991; ALA-2856 AND VAL-3412</scope>
</reference>
<reference key="69">
    <citation type="journal article" date="2004" name="Cancer Genet. Cytogenet.">
        <title>Hereditary breast and ovarian cancer in Cyprus: identification of a founder BRCA2 mutation.</title>
        <authorList>
            <person name="Hadjisavvas A."/>
            <person name="Charalambous E."/>
            <person name="Adamou A."/>
            <person name="Neuhausen S.L."/>
            <person name="Christodoulou C.G."/>
            <person name="Kyriacou K."/>
        </authorList>
    </citation>
    <scope>VARIANTS BC ILE-64; GLY-462; ASN-1690; ASP-1771; MET-1887; MET-1915 AND GLU-2456</scope>
    <scope>VARIANTS HIS-289; HIS-372; ASP-991; SER-1279; TYR-1420; CYS-2108 AND ALA-2466</scope>
</reference>
<reference key="70">
    <citation type="journal article" date="2004" name="Eur. J. Cancer">
        <title>One in 10 ovarian cancer patients carry germ line BRCA1 or BRCA2 mutations: results of a prospective study in Southern Sweden.</title>
        <authorList>
            <person name="Malander S."/>
            <person name="Ridderheim M."/>
            <person name="Masbaeck A."/>
            <person name="Loman N."/>
            <person name="Kristoffersson U."/>
            <person name="Olsson H."/>
            <person name="Nilbert M."/>
            <person name="Borg A."/>
        </authorList>
    </citation>
    <scope>VARIANT OVARIAN CANCER CYS-42</scope>
    <scope>VARIANTS SER-3063 AND VAL-3412</scope>
</reference>
<reference key="71">
    <citation type="journal article" date="2004" name="Hum. Mutat.">
        <title>Novel germline mutations in the BRCA1 and BRCA2 genes in Indian breast and breast-ovarian cancer families.</title>
        <authorList>
            <person name="Valarmathi M.T."/>
            <person name="Sawhney M."/>
            <person name="Deo S.S.V."/>
            <person name="Shukla N.K."/>
            <person name="Das S.N."/>
        </authorList>
    </citation>
    <scope>VARIANTS BC ILE-1679; ALA-1804; LYS-1901 AND LEU-2096</scope>
</reference>
<reference key="72">
    <citation type="journal article" date="2004" name="Hum. Mutat.">
        <title>RNA analysis reveals splicing mutations and loss of expression defects in MLH1 and BRCA1.</title>
        <authorList>
            <person name="Sharp A."/>
            <person name="Pichert G."/>
            <person name="Lucassen A."/>
            <person name="Eccles D."/>
        </authorList>
    </citation>
    <scope>VARIANT ALA-225</scope>
    <scope>CHARACTERIZATION OF VARIANT ALA-225</scope>
</reference>
<reference key="73">
    <citation type="journal article" date="2004" name="Hum. Mutat.">
        <title>BRCA1 and BRCA2 germline mutations in Korean patients with sporadic breast cancer.</title>
        <authorList>
            <person name="Seo J.H."/>
            <person name="Cho D.-Y."/>
            <person name="Ahn S.-H."/>
            <person name="Yoon K.-S."/>
            <person name="Kang C.-S."/>
            <person name="Cho H.M."/>
            <person name="Lee H.S."/>
            <person name="Choe J.J."/>
            <person name="Choi C.W."/>
            <person name="Kim B.S."/>
            <person name="Shin S.W."/>
            <person name="Kim Y.H."/>
            <person name="Kim J.S."/>
            <person name="Son G.-S."/>
            <person name="Lee J.-B."/>
            <person name="Koo B.H."/>
        </authorList>
    </citation>
    <scope>VARIANTS BC THR-1445; VAL-1929 AND ALA-2031</scope>
    <scope>VARIANTS HIS-289; HIS-372; VAL-784; ASP-991 AND VAL-3412</scope>
</reference>
<reference key="74">
    <citation type="journal article" date="2005" name="J. Med. Genet.">
        <title>Prevalence of BRCA2 mutations in a hospital based series of unselected breast cancer cases.</title>
        <authorList>
            <person name="Kim S.-W."/>
            <person name="Lee C.S."/>
            <person name="Fey J.V."/>
            <person name="Borgen P.I."/>
            <person name="Boyd J."/>
        </authorList>
    </citation>
    <scope>VARIANTS LEU-1172; TYR-1420; PHE-2944; ASN-2950 AND ILE-3013</scope>
</reference>
<reference key="75">
    <citation type="journal article" date="2007" name="Am. J. Hum. Genet.">
        <title>A systematic genetic assessment of 1,433 sequence variants of unknown clinical significance in the BRCA1 and BRCA2 breast cancer-predisposition genes.</title>
        <authorList>
            <person name="Easton D.F."/>
            <person name="Deffenbaugh A.M."/>
            <person name="Pruss D."/>
            <person name="Frye C."/>
            <person name="Wenstrup R.J."/>
            <person name="Allen-Brady K."/>
            <person name="Tavtigian S.V."/>
            <person name="Monteiro A.N.A."/>
            <person name="Iversen E.S."/>
            <person name="Couch F.J."/>
            <person name="Goldgar D.E."/>
        </authorList>
    </citation>
    <scope>VARIANTS BC CYS-2502; PHE-2627; PRO-2653; LYS-2659; VAL-2663; ARG-2722; GLY-2723; ASP-2748 AND GLU-3095</scope>
    <scope>VARIANTS FANCD1 HIS-2336 AND CYS-2626</scope>
</reference>
<reference key="76">
    <citation type="journal article" date="2007" name="J. Med. Genet.">
        <title>Clinical and molecular features associated with biallelic mutations in FANCD1/BRCA2.</title>
        <authorList>
            <person name="Alter B.P."/>
            <person name="Rosenberg P.S."/>
            <person name="Brody L.C."/>
        </authorList>
    </citation>
    <scope>VARIANTS FANCD1 HIS-2336 AND CYS-2626</scope>
</reference>
<reference key="77">
    <citation type="journal article" date="2010" name="Hum. Mutat.">
        <title>Detection of splicing aberrations caused by BRCA1 and BRCA2 sequence variants encoding missense substitutions: implications for prediction of pathogenicity.</title>
        <authorList>
            <person name="Walker L.C."/>
            <person name="Whiley P.J."/>
            <person name="Couch F.J."/>
            <person name="Farrugia D.J."/>
            <person name="Healey S."/>
            <person name="Eccles D.M."/>
            <person name="Lin F."/>
            <person name="Butler S.A."/>
            <person name="Goff S.A."/>
            <person name="Thompson B.A."/>
            <person name="Lakhani S.R."/>
            <person name="Da Silva L.M."/>
            <person name="Tavtigian S.V."/>
            <person name="Goldgar D.E."/>
            <person name="Brown M.A."/>
            <person name="Spurdle A.B."/>
        </authorList>
    </citation>
    <scope>CHARACTERIZATION OF VARIANTS VAL-2663; GLY-2723 AND TRP-3052</scope>
</reference>
<reference key="78">
    <citation type="journal article" date="2011" name="Blood">
        <title>A comprehensive functional characterization of BRCA2 variants associated with Fanconi anemia using mouse ES cell-based assay.</title>
        <authorList>
            <person name="Biswas K."/>
            <person name="Das R."/>
            <person name="Alter B.P."/>
            <person name="Kuznetsov S.G."/>
            <person name="Stauffer S."/>
            <person name="North S.L."/>
            <person name="Burkett S."/>
            <person name="Brody L.C."/>
            <person name="Meyer S."/>
            <person name="Byrd R.A."/>
            <person name="Sharan S.K."/>
        </authorList>
    </citation>
    <scope>CHARACTERIZATION OF VARIANTS FANCD1 HIS-2336; PRO-2510 AND CYS-2626</scope>
    <scope>CHARACTERIZATION OF VARIANTS THR-2490 AND ASN-2729</scope>
    <scope>FUNCTION</scope>
    <scope>INTERACTION WITH SEM1</scope>
</reference>
<reference key="79">
    <citation type="journal article" date="2013" name="Cancer Res.">
        <title>A classification model for BRCA2 DNA binding domain missense variants based on homology-directed repair activity.</title>
        <authorList>
            <person name="Guidugli L."/>
            <person name="Pankratz V.S."/>
            <person name="Singh N."/>
            <person name="Thompson J."/>
            <person name="Erding C.A."/>
            <person name="Engel C."/>
            <person name="Schmutzler R."/>
            <person name="Domchek S."/>
            <person name="Nathanson K."/>
            <person name="Radice P."/>
            <person name="Singer C."/>
            <person name="Tonin P.N."/>
            <person name="Lindor N.M."/>
            <person name="Goldgar D.E."/>
            <person name="Couch F.J."/>
        </authorList>
    </citation>
    <scope>CHARACTERIZATION OF VARIANTS BC PHE-2627; PRO-2653; ARG-2722; GLY-2723; HIS-2723; ASN-2729; HIS-2787; PRO-2792; ARG-2793; ALA-2856; THR-2951; ILE-3013; TRP-3052; GLU-3076; GLU-3095; HIS-3098 AND ILE-3124</scope>
    <scope>CHARACTERIZATION OF VARIANTS ARG-2440; ALA-2466; CYS-2842 AND SER-3063</scope>
    <scope>CHARACTERIZATION OF VARIANT FANCD1 PRO-2510 AND CYS-2626</scope>
</reference>
<reference key="80">
    <citation type="journal article" date="2016" name="J. Med. Genet.">
        <title>Homozygous missense mutation in the LMAN2L gene segregates with intellectual disability in a large consanguineous Pakistani family.</title>
        <authorList>
            <person name="Rafiullah R."/>
            <person name="Aslamkhan M."/>
            <person name="Paramasivam N."/>
            <person name="Thiel C."/>
            <person name="Mustafa G."/>
            <person name="Wiemann S."/>
            <person name="Schlesner M."/>
            <person name="Wade R.C."/>
            <person name="Rappold G.A."/>
            <person name="Berkel S."/>
        </authorList>
    </citation>
    <scope>VARIANTS LEU-606 AND TYR-1420</scope>
</reference>
<reference key="81">
    <citation type="journal article" date="2017" name="PLoS ONE">
        <title>BRCA1 and BRCA2 mutational profile and prevalence in hereditary breast and ovarian cancer (HBOC) probands from Southern Brazil: Are international testing criteria appropriate for this specific population?</title>
        <authorList>
            <person name="Alemar B."/>
            <person name="Gregorio C."/>
            <person name="Herzog J."/>
            <person name="Matzenbacher Bittar C."/>
            <person name="Brinckmann Oliveira Netto C."/>
            <person name="Artigalas O."/>
            <person name="Schwartz I.V.D."/>
            <person name="Coffa J."/>
            <person name="Alves Camey S."/>
            <person name="Weitzel J."/>
            <person name="Ashton-Prolla P."/>
        </authorList>
    </citation>
    <scope>VARIANT BC ALA-728</scope>
</reference>
<reference key="82">
    <citation type="journal article" date="2018" name="Lancet Oncol.">
        <title>Spectrum and prevalence of genetic predisposition in medulloblastoma: a retrospective genetic study and prospective validation in a clinical trial cohort.</title>
        <authorList>
            <person name="Waszak S.M."/>
            <person name="Northcott P.A."/>
            <person name="Buchhalter I."/>
            <person name="Robinson G.W."/>
            <person name="Sutter C."/>
            <person name="Groebner S."/>
            <person name="Grund K.B."/>
            <person name="Brugieres L."/>
            <person name="Jones D.T.W."/>
            <person name="Pajtler K.W."/>
            <person name="Morrissy A.S."/>
            <person name="Kool M."/>
            <person name="Sturm D."/>
            <person name="Chavez L."/>
            <person name="Ernst A."/>
            <person name="Brabetz S."/>
            <person name="Hain M."/>
            <person name="Zichner T."/>
            <person name="Segura-Wang M."/>
            <person name="Weischenfeldt J."/>
            <person name="Rausch T."/>
            <person name="Mardin B.R."/>
            <person name="Zhou X."/>
            <person name="Baciu C."/>
            <person name="Lawerenz C."/>
            <person name="Chan J.A."/>
            <person name="Varlet P."/>
            <person name="Guerrini-Rousseau L."/>
            <person name="Fults D.W."/>
            <person name="Grajkowska W."/>
            <person name="Hauser P."/>
            <person name="Jabado N."/>
            <person name="Ra Y.S."/>
            <person name="Zitterbart K."/>
            <person name="Shringarpure S.S."/>
            <person name="De La Vega F.M."/>
            <person name="Bustamante C.D."/>
            <person name="Ng H.K."/>
            <person name="Perry A."/>
            <person name="MacDonald T.J."/>
            <person name="Hernaiz Driever P."/>
            <person name="Bendel A.E."/>
            <person name="Bowers D.C."/>
            <person name="McCowage G."/>
            <person name="Chintagumpala M.M."/>
            <person name="Cohn R."/>
            <person name="Hassall T."/>
            <person name="Fleischhack G."/>
            <person name="Eggen T."/>
            <person name="Wesenberg F."/>
            <person name="Feychting M."/>
            <person name="Lannering B."/>
            <person name="Schuez J."/>
            <person name="Johansen C."/>
            <person name="Andersen T.V."/>
            <person name="Roeoesli M."/>
            <person name="Kuehni C.E."/>
            <person name="Grotzer M."/>
            <person name="Kjaerheim K."/>
            <person name="Monoranu C.M."/>
            <person name="Archer T.C."/>
            <person name="Duke E."/>
            <person name="Pomeroy S.L."/>
            <person name="Shelagh R."/>
            <person name="Frank S."/>
            <person name="Sumerauer D."/>
            <person name="Scheurlen W."/>
            <person name="Ryzhova M.V."/>
            <person name="Milde T."/>
            <person name="Kratz C.P."/>
            <person name="Samuel D."/>
            <person name="Zhang J."/>
            <person name="Solomon D.A."/>
            <person name="Marra M."/>
            <person name="Eils R."/>
            <person name="Bartram C.R."/>
            <person name="von Hoff K."/>
            <person name="Rutkowski S."/>
            <person name="Ramaswamy V."/>
            <person name="Gilbertson R.J."/>
            <person name="Korshunov A."/>
            <person name="Taylor M.D."/>
            <person name="Lichter P."/>
            <person name="Malkin D."/>
            <person name="Gajjar A."/>
            <person name="Korbel J.O."/>
            <person name="Pfister S.M."/>
        </authorList>
    </citation>
    <scope>INVOLVEMENT IN MDB</scope>
</reference>
<keyword id="KW-0002">3D-structure</keyword>
<keyword id="KW-0131">Cell cycle</keyword>
<keyword id="KW-0963">Cytoplasm</keyword>
<keyword id="KW-0206">Cytoskeleton</keyword>
<keyword id="KW-0225">Disease variant</keyword>
<keyword id="KW-0227">DNA damage</keyword>
<keyword id="KW-0233">DNA recombination</keyword>
<keyword id="KW-0234">DNA repair</keyword>
<keyword id="KW-0238">DNA-binding</keyword>
<keyword id="KW-0923">Fanconi anemia</keyword>
<keyword id="KW-0539">Nucleus</keyword>
<keyword id="KW-0597">Phosphoprotein</keyword>
<keyword id="KW-1267">Proteomics identification</keyword>
<keyword id="KW-1185">Reference proteome</keyword>
<keyword id="KW-0677">Repeat</keyword>
<keyword id="KW-0043">Tumor suppressor</keyword>
<keyword id="KW-0832">Ubl conjugation</keyword>
<dbReference type="EMBL" id="X95152">
    <property type="protein sequence ID" value="CAA64484.1"/>
    <property type="molecule type" value="Genomic_DNA"/>
</dbReference>
<dbReference type="EMBL" id="X95153">
    <property type="protein sequence ID" value="CAA64484.1"/>
    <property type="status" value="JOINED"/>
    <property type="molecule type" value="Genomic_DNA"/>
</dbReference>
<dbReference type="EMBL" id="X95154">
    <property type="protein sequence ID" value="CAA64484.1"/>
    <property type="status" value="JOINED"/>
    <property type="molecule type" value="Genomic_DNA"/>
</dbReference>
<dbReference type="EMBL" id="X95155">
    <property type="protein sequence ID" value="CAA64484.1"/>
    <property type="status" value="JOINED"/>
    <property type="molecule type" value="Genomic_DNA"/>
</dbReference>
<dbReference type="EMBL" id="X95156">
    <property type="protein sequence ID" value="CAA64484.1"/>
    <property type="status" value="JOINED"/>
    <property type="molecule type" value="Genomic_DNA"/>
</dbReference>
<dbReference type="EMBL" id="X95157">
    <property type="protein sequence ID" value="CAA64484.1"/>
    <property type="status" value="JOINED"/>
    <property type="molecule type" value="Genomic_DNA"/>
</dbReference>
<dbReference type="EMBL" id="X95158">
    <property type="protein sequence ID" value="CAA64484.1"/>
    <property type="status" value="JOINED"/>
    <property type="molecule type" value="Genomic_DNA"/>
</dbReference>
<dbReference type="EMBL" id="X95159">
    <property type="protein sequence ID" value="CAA64484.1"/>
    <property type="status" value="JOINED"/>
    <property type="molecule type" value="Genomic_DNA"/>
</dbReference>
<dbReference type="EMBL" id="X95160">
    <property type="protein sequence ID" value="CAA64484.1"/>
    <property type="status" value="JOINED"/>
    <property type="molecule type" value="Genomic_DNA"/>
</dbReference>
<dbReference type="EMBL" id="X95161">
    <property type="protein sequence ID" value="CAA64484.1"/>
    <property type="status" value="JOINED"/>
    <property type="molecule type" value="Genomic_DNA"/>
</dbReference>
<dbReference type="EMBL" id="X95162">
    <property type="protein sequence ID" value="CAA64484.1"/>
    <property type="status" value="JOINED"/>
    <property type="molecule type" value="Genomic_DNA"/>
</dbReference>
<dbReference type="EMBL" id="X95163">
    <property type="protein sequence ID" value="CAA64484.1"/>
    <property type="status" value="JOINED"/>
    <property type="molecule type" value="Genomic_DNA"/>
</dbReference>
<dbReference type="EMBL" id="X95164">
    <property type="protein sequence ID" value="CAA64484.1"/>
    <property type="status" value="JOINED"/>
    <property type="molecule type" value="Genomic_DNA"/>
</dbReference>
<dbReference type="EMBL" id="X95165">
    <property type="protein sequence ID" value="CAA64484.1"/>
    <property type="status" value="JOINED"/>
    <property type="molecule type" value="Genomic_DNA"/>
</dbReference>
<dbReference type="EMBL" id="X95166">
    <property type="protein sequence ID" value="CAA64484.1"/>
    <property type="status" value="JOINED"/>
    <property type="molecule type" value="Genomic_DNA"/>
</dbReference>
<dbReference type="EMBL" id="X95167">
    <property type="protein sequence ID" value="CAA64484.1"/>
    <property type="status" value="JOINED"/>
    <property type="molecule type" value="Genomic_DNA"/>
</dbReference>
<dbReference type="EMBL" id="X95168">
    <property type="protein sequence ID" value="CAA64484.1"/>
    <property type="status" value="JOINED"/>
    <property type="molecule type" value="Genomic_DNA"/>
</dbReference>
<dbReference type="EMBL" id="X95169">
    <property type="protein sequence ID" value="CAA64484.1"/>
    <property type="status" value="JOINED"/>
    <property type="molecule type" value="Genomic_DNA"/>
</dbReference>
<dbReference type="EMBL" id="X95170">
    <property type="protein sequence ID" value="CAA64484.1"/>
    <property type="status" value="JOINED"/>
    <property type="molecule type" value="Genomic_DNA"/>
</dbReference>
<dbReference type="EMBL" id="X95171">
    <property type="protein sequence ID" value="CAA64484.1"/>
    <property type="status" value="JOINED"/>
    <property type="molecule type" value="Genomic_DNA"/>
</dbReference>
<dbReference type="EMBL" id="X95172">
    <property type="protein sequence ID" value="CAA64484.1"/>
    <property type="status" value="JOINED"/>
    <property type="molecule type" value="Genomic_DNA"/>
</dbReference>
<dbReference type="EMBL" id="X95173">
    <property type="protein sequence ID" value="CAA64484.1"/>
    <property type="status" value="JOINED"/>
    <property type="molecule type" value="Genomic_DNA"/>
</dbReference>
<dbReference type="EMBL" id="X95174">
    <property type="protein sequence ID" value="CAA64484.1"/>
    <property type="status" value="JOINED"/>
    <property type="molecule type" value="Genomic_DNA"/>
</dbReference>
<dbReference type="EMBL" id="X95175">
    <property type="protein sequence ID" value="CAA64484.1"/>
    <property type="status" value="JOINED"/>
    <property type="molecule type" value="Genomic_DNA"/>
</dbReference>
<dbReference type="EMBL" id="X95176">
    <property type="protein sequence ID" value="CAA64484.1"/>
    <property type="status" value="JOINED"/>
    <property type="molecule type" value="Genomic_DNA"/>
</dbReference>
<dbReference type="EMBL" id="X95177">
    <property type="protein sequence ID" value="CAA64484.1"/>
    <property type="status" value="JOINED"/>
    <property type="molecule type" value="Genomic_DNA"/>
</dbReference>
<dbReference type="EMBL" id="U43746">
    <property type="protein sequence ID" value="AAB07223.1"/>
    <property type="molecule type" value="mRNA"/>
</dbReference>
<dbReference type="EMBL" id="AY436640">
    <property type="protein sequence ID" value="AAQ97181.1"/>
    <property type="molecule type" value="Genomic_DNA"/>
</dbReference>
<dbReference type="EMBL" id="AL137247">
    <property type="status" value="NOT_ANNOTATED_CDS"/>
    <property type="molecule type" value="Genomic_DNA"/>
</dbReference>
<dbReference type="EMBL" id="AL445212">
    <property type="status" value="NOT_ANNOTATED_CDS"/>
    <property type="molecule type" value="Genomic_DNA"/>
</dbReference>
<dbReference type="EMBL" id="Z74739">
    <property type="protein sequence ID" value="CAA98995.2"/>
    <property type="molecule type" value="Genomic_DNA"/>
</dbReference>
<dbReference type="EMBL" id="Z73359">
    <property type="protein sequence ID" value="CAA97728.1"/>
    <property type="molecule type" value="Genomic_DNA"/>
</dbReference>
<dbReference type="CCDS" id="CCDS9344.1"/>
<dbReference type="PIR" id="G02334">
    <property type="entry name" value="G02334"/>
</dbReference>
<dbReference type="RefSeq" id="NP_000050.3">
    <property type="nucleotide sequence ID" value="NM_000059.4"/>
</dbReference>
<dbReference type="RefSeq" id="NP_001419006.1">
    <property type="nucleotide sequence ID" value="NM_001432077.1"/>
</dbReference>
<dbReference type="PDB" id="1N0W">
    <property type="method" value="X-ray"/>
    <property type="resolution" value="1.70 A"/>
    <property type="chains" value="B=1517-1551"/>
</dbReference>
<dbReference type="PDB" id="3EU7">
    <property type="method" value="X-ray"/>
    <property type="resolution" value="2.20 A"/>
    <property type="chains" value="X=21-39"/>
</dbReference>
<dbReference type="PDB" id="6GY2">
    <property type="method" value="X-ray"/>
    <property type="resolution" value="3.11 A"/>
    <property type="chains" value="C/D=194-210"/>
</dbReference>
<dbReference type="PDB" id="6HQU">
    <property type="method" value="X-ray"/>
    <property type="resolution" value="1.97 A"/>
    <property type="chains" value="I/J/K/L/M/N=1226-1253, O=2054-2064"/>
</dbReference>
<dbReference type="PDB" id="7BDX">
    <property type="method" value="X-ray"/>
    <property type="resolution" value="2.60 A"/>
    <property type="chains" value="E/F=2291-2343"/>
</dbReference>
<dbReference type="PDB" id="7LDG">
    <property type="method" value="X-ray"/>
    <property type="resolution" value="2.56 A"/>
    <property type="chains" value="B/D=2271-2335"/>
</dbReference>
<dbReference type="PDB" id="8BR9">
    <property type="method" value="X-ray"/>
    <property type="resolution" value="1.63 A"/>
    <property type="chains" value="B=1226-1263"/>
</dbReference>
<dbReference type="PDB" id="8C3J">
    <property type="method" value="X-ray"/>
    <property type="resolution" value="3.02 A"/>
    <property type="chains" value="C/J=1226-1244"/>
</dbReference>
<dbReference type="PDB" id="8C3N">
    <property type="method" value="X-ray"/>
    <property type="resolution" value="1.21 A"/>
    <property type="chains" value="B=1215-1243"/>
</dbReference>
<dbReference type="PDB" id="8PBC">
    <property type="method" value="EM"/>
    <property type="resolution" value="2.61 A"/>
    <property type="chains" value="L/M/N/O/P/Q/R/S/T/U=3260-3308"/>
</dbReference>
<dbReference type="PDB" id="8PBD">
    <property type="method" value="EM"/>
    <property type="resolution" value="2.83 A"/>
    <property type="chains" value="K/L/M/N/O/P/Q/R/S=3260-3308"/>
</dbReference>
<dbReference type="PDB" id="8QQE">
    <property type="method" value="X-ray"/>
    <property type="resolution" value="3.46 A"/>
    <property type="chains" value="C/D=2398-2417"/>
</dbReference>
<dbReference type="PDB" id="8R2G">
    <property type="method" value="X-ray"/>
    <property type="resolution" value="3.45 A"/>
    <property type="chains" value="I/J/K/L/M/N/O=2400-2413"/>
</dbReference>
<dbReference type="PDB" id="8UVW">
    <property type="method" value="X-ray"/>
    <property type="resolution" value="2.73 A"/>
    <property type="chains" value="B=1518-1547, D=3270-3305"/>
</dbReference>
<dbReference type="PDBsum" id="1N0W"/>
<dbReference type="PDBsum" id="3EU7"/>
<dbReference type="PDBsum" id="6GY2"/>
<dbReference type="PDBsum" id="6HQU"/>
<dbReference type="PDBsum" id="7BDX"/>
<dbReference type="PDBsum" id="7LDG"/>
<dbReference type="PDBsum" id="8BR9"/>
<dbReference type="PDBsum" id="8C3J"/>
<dbReference type="PDBsum" id="8C3N"/>
<dbReference type="PDBsum" id="8PBC"/>
<dbReference type="PDBsum" id="8PBD"/>
<dbReference type="PDBsum" id="8QQE"/>
<dbReference type="PDBsum" id="8R2G"/>
<dbReference type="PDBsum" id="8UVW"/>
<dbReference type="EMDB" id="EMD-17584"/>
<dbReference type="EMDB" id="EMD-17585"/>
<dbReference type="EMDB" id="EMD-2779"/>
<dbReference type="EMDB" id="EMD-2780"/>
<dbReference type="SASBDB" id="P51587"/>
<dbReference type="SMR" id="P51587"/>
<dbReference type="BioGRID" id="107142">
    <property type="interactions" value="388"/>
</dbReference>
<dbReference type="ComplexPortal" id="CPX-845">
    <property type="entry name" value="BRCA1-PALB2-BRCA2 homologous recombination DNA repair complex"/>
</dbReference>
<dbReference type="ComplexPortal" id="CPX-955">
    <property type="entry name" value="BRCC E3 ubiquitin ligase complex"/>
</dbReference>
<dbReference type="CORUM" id="P51587"/>
<dbReference type="DIP" id="DIP-24214N"/>
<dbReference type="ELM" id="P51587"/>
<dbReference type="FunCoup" id="P51587">
    <property type="interactions" value="997"/>
</dbReference>
<dbReference type="IntAct" id="P51587">
    <property type="interactions" value="100"/>
</dbReference>
<dbReference type="MINT" id="P51587"/>
<dbReference type="STRING" id="9606.ENSP00000369497"/>
<dbReference type="BindingDB" id="P51587"/>
<dbReference type="GlyGen" id="P51587">
    <property type="glycosylation" value="5 sites, 4 N-linked glycans (2 sites), 1 O-linked glycan (1 site)"/>
</dbReference>
<dbReference type="iPTMnet" id="P51587"/>
<dbReference type="PhosphoSitePlus" id="P51587"/>
<dbReference type="BioMuta" id="BRCA2"/>
<dbReference type="DMDM" id="14424438"/>
<dbReference type="CPTAC" id="CPTAC-3279"/>
<dbReference type="CPTAC" id="CPTAC-3280"/>
<dbReference type="jPOST" id="P51587"/>
<dbReference type="MassIVE" id="P51587"/>
<dbReference type="PaxDb" id="9606-ENSP00000369497"/>
<dbReference type="PeptideAtlas" id="P51587"/>
<dbReference type="ProteomicsDB" id="56340"/>
<dbReference type="Pumba" id="P51587"/>
<dbReference type="Antibodypedia" id="7788">
    <property type="antibodies" value="346 antibodies from 42 providers"/>
</dbReference>
<dbReference type="DNASU" id="675"/>
<dbReference type="Ensembl" id="ENST00000380152.8">
    <property type="protein sequence ID" value="ENSP00000369497.3"/>
    <property type="gene ID" value="ENSG00000139618.19"/>
</dbReference>
<dbReference type="Ensembl" id="ENST00000544455.6">
    <property type="protein sequence ID" value="ENSP00000439902.1"/>
    <property type="gene ID" value="ENSG00000139618.19"/>
</dbReference>
<dbReference type="Ensembl" id="ENST00000680887.1">
    <property type="protein sequence ID" value="ENSP00000505508.1"/>
    <property type="gene ID" value="ENSG00000139618.19"/>
</dbReference>
<dbReference type="GeneID" id="675"/>
<dbReference type="KEGG" id="hsa:675"/>
<dbReference type="MANE-Select" id="ENST00000380152.8">
    <property type="protein sequence ID" value="ENSP00000369497.3"/>
    <property type="RefSeq nucleotide sequence ID" value="NM_000059.4"/>
    <property type="RefSeq protein sequence ID" value="NP_000050.3"/>
</dbReference>
<dbReference type="UCSC" id="uc001uub.2">
    <property type="organism name" value="human"/>
</dbReference>
<dbReference type="AGR" id="HGNC:1101"/>
<dbReference type="CTD" id="675"/>
<dbReference type="DisGeNET" id="675"/>
<dbReference type="GeneCards" id="BRCA2"/>
<dbReference type="GeneReviews" id="BRCA2"/>
<dbReference type="HGNC" id="HGNC:1101">
    <property type="gene designation" value="BRCA2"/>
</dbReference>
<dbReference type="HPA" id="ENSG00000139618">
    <property type="expression patterns" value="Tissue enhanced (bone marrow, lymphoid tissue, testis)"/>
</dbReference>
<dbReference type="MalaCards" id="BRCA2"/>
<dbReference type="MIM" id="114480">
    <property type="type" value="phenotype"/>
</dbReference>
<dbReference type="MIM" id="155255">
    <property type="type" value="phenotype"/>
</dbReference>
<dbReference type="MIM" id="600185">
    <property type="type" value="gene"/>
</dbReference>
<dbReference type="MIM" id="605724">
    <property type="type" value="phenotype"/>
</dbReference>
<dbReference type="MIM" id="612555">
    <property type="type" value="phenotype"/>
</dbReference>
<dbReference type="MIM" id="613029">
    <property type="type" value="phenotype"/>
</dbReference>
<dbReference type="MIM" id="613347">
    <property type="type" value="phenotype"/>
</dbReference>
<dbReference type="neXtProt" id="NX_P51587"/>
<dbReference type="OpenTargets" id="ENSG00000139618"/>
<dbReference type="Orphanet" id="70567">
    <property type="disease" value="Cholangiocarcinoma"/>
</dbReference>
<dbReference type="Orphanet" id="178">
    <property type="disease" value="Chordoma"/>
</dbReference>
<dbReference type="Orphanet" id="440437">
    <property type="disease" value="Familial colorectal cancer Type X"/>
</dbReference>
<dbReference type="Orphanet" id="1333">
    <property type="disease" value="Familial pancreatic carcinoma"/>
</dbReference>
<dbReference type="Orphanet" id="1331">
    <property type="disease" value="Familial prostate cancer"/>
</dbReference>
<dbReference type="Orphanet" id="84">
    <property type="disease" value="Fanconi anemia"/>
</dbReference>
<dbReference type="Orphanet" id="145">
    <property type="disease" value="Hereditary breast and/or ovarian cancer syndrome"/>
</dbReference>
<dbReference type="Orphanet" id="227535">
    <property type="disease" value="Hereditary breast cancer"/>
</dbReference>
<dbReference type="Orphanet" id="319462">
    <property type="disease" value="Inherited cancer-predisposing syndrome due to biallelic BRCA2 mutations"/>
</dbReference>
<dbReference type="Orphanet" id="654">
    <property type="disease" value="Nephroblastoma"/>
</dbReference>
<dbReference type="PharmGKB" id="PA25412"/>
<dbReference type="VEuPathDB" id="HostDB:ENSG00000139618"/>
<dbReference type="eggNOG" id="KOG4751">
    <property type="taxonomic scope" value="Eukaryota"/>
</dbReference>
<dbReference type="GeneTree" id="ENSGT00390000003602"/>
<dbReference type="HOGENOM" id="CLU_000344_0_0_1"/>
<dbReference type="InParanoid" id="P51587"/>
<dbReference type="OMA" id="CWYTKLG"/>
<dbReference type="OrthoDB" id="21095at2759"/>
<dbReference type="PAN-GO" id="P51587">
    <property type="GO annotations" value="3 GO annotations based on evolutionary models"/>
</dbReference>
<dbReference type="PhylomeDB" id="P51587"/>
<dbReference type="TreeFam" id="TF105041"/>
<dbReference type="PathwayCommons" id="P51587"/>
<dbReference type="Reactome" id="R-HSA-5685939">
    <property type="pathway name" value="HDR through MMEJ (alt-NHEJ)"/>
</dbReference>
<dbReference type="Reactome" id="R-HSA-5685942">
    <property type="pathway name" value="HDR through Homologous Recombination (HRR)"/>
</dbReference>
<dbReference type="Reactome" id="R-HSA-5693554">
    <property type="pathway name" value="Resolution of D-loop Structures through Synthesis-Dependent Strand Annealing (SDSA)"/>
</dbReference>
<dbReference type="Reactome" id="R-HSA-5693568">
    <property type="pathway name" value="Resolution of D-loop Structures through Holliday Junction Intermediates"/>
</dbReference>
<dbReference type="Reactome" id="R-HSA-5693579">
    <property type="pathway name" value="Homologous DNA Pairing and Strand Exchange"/>
</dbReference>
<dbReference type="Reactome" id="R-HSA-5693616">
    <property type="pathway name" value="Presynaptic phase of homologous DNA pairing and strand exchange"/>
</dbReference>
<dbReference type="Reactome" id="R-HSA-912446">
    <property type="pathway name" value="Meiotic recombination"/>
</dbReference>
<dbReference type="Reactome" id="R-HSA-9701192">
    <property type="pathway name" value="Defective homologous recombination repair (HRR) due to BRCA1 loss of function"/>
</dbReference>
<dbReference type="Reactome" id="R-HSA-9704331">
    <property type="pathway name" value="Defective HDR through Homologous Recombination Repair (HRR) due to PALB2 loss of BRCA1 binding function"/>
</dbReference>
<dbReference type="Reactome" id="R-HSA-9704646">
    <property type="pathway name" value="Defective HDR through Homologous Recombination Repair (HRR) due to PALB2 loss of BRCA2/RAD51/RAD51C binding function"/>
</dbReference>
<dbReference type="Reactome" id="R-HSA-9709275">
    <property type="pathway name" value="Impaired BRCA2 translocation to the nucleus"/>
</dbReference>
<dbReference type="Reactome" id="R-HSA-9709570">
    <property type="pathway name" value="Impaired BRCA2 binding to RAD51"/>
</dbReference>
<dbReference type="Reactome" id="R-HSA-9709603">
    <property type="pathway name" value="Impaired BRCA2 binding to PALB2"/>
</dbReference>
<dbReference type="Reactome" id="R-HSA-9763198">
    <property type="pathway name" value="Impaired BRCA2 binding to SEM1 (DSS1)"/>
</dbReference>
<dbReference type="SignaLink" id="P51587"/>
<dbReference type="SIGNOR" id="P51587"/>
<dbReference type="BioGRID-ORCS" id="675">
    <property type="hits" value="342 hits in 1176 CRISPR screens"/>
</dbReference>
<dbReference type="CD-CODE" id="8C2F96ED">
    <property type="entry name" value="Centrosome"/>
</dbReference>
<dbReference type="ChiTaRS" id="BRCA2">
    <property type="organism name" value="human"/>
</dbReference>
<dbReference type="EvolutionaryTrace" id="P51587"/>
<dbReference type="GeneWiki" id="BRCA2"/>
<dbReference type="GenomeRNAi" id="675"/>
<dbReference type="Pharos" id="P51587">
    <property type="development level" value="Tbio"/>
</dbReference>
<dbReference type="PRO" id="PR:P51587"/>
<dbReference type="Proteomes" id="UP000005640">
    <property type="component" value="Chromosome 13"/>
</dbReference>
<dbReference type="RNAct" id="P51587">
    <property type="molecule type" value="protein"/>
</dbReference>
<dbReference type="Bgee" id="ENSG00000139618">
    <property type="expression patterns" value="Expressed in male germ line stem cell (sensu Vertebrata) in testis and 115 other cell types or tissues"/>
</dbReference>
<dbReference type="ExpressionAtlas" id="P51587">
    <property type="expression patterns" value="baseline and differential"/>
</dbReference>
<dbReference type="GO" id="GO:0033593">
    <property type="term" value="C:BRCA2-MAGE-D1 complex"/>
    <property type="evidence" value="ECO:0000314"/>
    <property type="project" value="UniProtKB"/>
</dbReference>
<dbReference type="GO" id="GO:0005813">
    <property type="term" value="C:centrosome"/>
    <property type="evidence" value="ECO:0000314"/>
    <property type="project" value="UniProtKB"/>
</dbReference>
<dbReference type="GO" id="GO:0000781">
    <property type="term" value="C:chromosome, telomeric region"/>
    <property type="evidence" value="ECO:0000314"/>
    <property type="project" value="BHF-UCL"/>
</dbReference>
<dbReference type="GO" id="GO:0005829">
    <property type="term" value="C:cytosol"/>
    <property type="evidence" value="ECO:0000314"/>
    <property type="project" value="HPA"/>
</dbReference>
<dbReference type="GO" id="GO:1990391">
    <property type="term" value="C:DNA repair complex"/>
    <property type="evidence" value="ECO:0000353"/>
    <property type="project" value="ComplexPortal"/>
</dbReference>
<dbReference type="GO" id="GO:0000800">
    <property type="term" value="C:lateral element"/>
    <property type="evidence" value="ECO:0000314"/>
    <property type="project" value="MGI"/>
</dbReference>
<dbReference type="GO" id="GO:0000152">
    <property type="term" value="C:nuclear ubiquitin ligase complex"/>
    <property type="evidence" value="ECO:0000314"/>
    <property type="project" value="ComplexPortal"/>
</dbReference>
<dbReference type="GO" id="GO:0005654">
    <property type="term" value="C:nucleoplasm"/>
    <property type="evidence" value="ECO:0000314"/>
    <property type="project" value="HPA"/>
</dbReference>
<dbReference type="GO" id="GO:0005634">
    <property type="term" value="C:nucleus"/>
    <property type="evidence" value="ECO:0000314"/>
    <property type="project" value="UniProtKB"/>
</dbReference>
<dbReference type="GO" id="GO:0032991">
    <property type="term" value="C:protein-containing complex"/>
    <property type="evidence" value="ECO:0000314"/>
    <property type="project" value="UniProtKB"/>
</dbReference>
<dbReference type="GO" id="GO:0030141">
    <property type="term" value="C:secretory granule"/>
    <property type="evidence" value="ECO:0000314"/>
    <property type="project" value="UniProtKB"/>
</dbReference>
<dbReference type="GO" id="GO:0043015">
    <property type="term" value="F:gamma-tubulin binding"/>
    <property type="evidence" value="ECO:0000353"/>
    <property type="project" value="UniProtKB"/>
</dbReference>
<dbReference type="GO" id="GO:0010484">
    <property type="term" value="F:histone H3 acetyltransferase activity"/>
    <property type="evidence" value="ECO:0000314"/>
    <property type="project" value="UniProtKB"/>
</dbReference>
<dbReference type="GO" id="GO:0010485">
    <property type="term" value="F:histone H4 acetyltransferase activity"/>
    <property type="evidence" value="ECO:0000314"/>
    <property type="project" value="UniProtKB"/>
</dbReference>
<dbReference type="GO" id="GO:0042802">
    <property type="term" value="F:identical protein binding"/>
    <property type="evidence" value="ECO:0000353"/>
    <property type="project" value="IntAct"/>
</dbReference>
<dbReference type="GO" id="GO:0002020">
    <property type="term" value="F:protease binding"/>
    <property type="evidence" value="ECO:0000353"/>
    <property type="project" value="UniProtKB"/>
</dbReference>
<dbReference type="GO" id="GO:0003697">
    <property type="term" value="F:single-stranded DNA binding"/>
    <property type="evidence" value="ECO:0000314"/>
    <property type="project" value="UniProtKB"/>
</dbReference>
<dbReference type="GO" id="GO:0007420">
    <property type="term" value="P:brain development"/>
    <property type="evidence" value="ECO:0007669"/>
    <property type="project" value="Ensembl"/>
</dbReference>
<dbReference type="GO" id="GO:0071479">
    <property type="term" value="P:cellular response to ionizing radiation"/>
    <property type="evidence" value="ECO:0000315"/>
    <property type="project" value="ComplexPortal"/>
</dbReference>
<dbReference type="GO" id="GO:0090398">
    <property type="term" value="P:cellular senescence"/>
    <property type="evidence" value="ECO:0007669"/>
    <property type="project" value="Ensembl"/>
</dbReference>
<dbReference type="GO" id="GO:0051298">
    <property type="term" value="P:centrosome duplication"/>
    <property type="evidence" value="ECO:0000315"/>
    <property type="project" value="UniProtKB"/>
</dbReference>
<dbReference type="GO" id="GO:0030330">
    <property type="term" value="P:DNA damage response, signal transduction by p53 class mediator"/>
    <property type="evidence" value="ECO:0007669"/>
    <property type="project" value="Ensembl"/>
</dbReference>
<dbReference type="GO" id="GO:0006302">
    <property type="term" value="P:double-strand break repair"/>
    <property type="evidence" value="ECO:0000315"/>
    <property type="project" value="UniProtKB"/>
</dbReference>
<dbReference type="GO" id="GO:0000724">
    <property type="term" value="P:double-strand break repair via homologous recombination"/>
    <property type="evidence" value="ECO:0000314"/>
    <property type="project" value="UniProtKB"/>
</dbReference>
<dbReference type="GO" id="GO:0070200">
    <property type="term" value="P:establishment of protein localization to telomere"/>
    <property type="evidence" value="ECO:0000314"/>
    <property type="project" value="BHF-UCL"/>
</dbReference>
<dbReference type="GO" id="GO:0008585">
    <property type="term" value="P:female gonad development"/>
    <property type="evidence" value="ECO:0007669"/>
    <property type="project" value="Ensembl"/>
</dbReference>
<dbReference type="GO" id="GO:0071425">
    <property type="term" value="P:hematopoietic stem cell proliferation"/>
    <property type="evidence" value="ECO:0007669"/>
    <property type="project" value="Ensembl"/>
</dbReference>
<dbReference type="GO" id="GO:0001833">
    <property type="term" value="P:inner cell mass cell proliferation"/>
    <property type="evidence" value="ECO:0007669"/>
    <property type="project" value="Ensembl"/>
</dbReference>
<dbReference type="GO" id="GO:0042771">
    <property type="term" value="P:intrinsic apoptotic signaling pathway in response to DNA damage by p53 class mediator"/>
    <property type="evidence" value="ECO:0007669"/>
    <property type="project" value="Ensembl"/>
</dbReference>
<dbReference type="GO" id="GO:0007141">
    <property type="term" value="P:male meiosis I"/>
    <property type="evidence" value="ECO:0007669"/>
    <property type="project" value="Ensembl"/>
</dbReference>
<dbReference type="GO" id="GO:1990426">
    <property type="term" value="P:mitotic recombination-dependent replication fork processing"/>
    <property type="evidence" value="ECO:0000315"/>
    <property type="project" value="BHF-UCL"/>
</dbReference>
<dbReference type="GO" id="GO:0033600">
    <property type="term" value="P:negative regulation of mammary gland epithelial cell proliferation"/>
    <property type="evidence" value="ECO:0000314"/>
    <property type="project" value="UniProtKB"/>
</dbReference>
<dbReference type="GO" id="GO:0006289">
    <property type="term" value="P:nucleotide-excision repair"/>
    <property type="evidence" value="ECO:0000315"/>
    <property type="project" value="UniProtKB"/>
</dbReference>
<dbReference type="GO" id="GO:0001556">
    <property type="term" value="P:oocyte maturation"/>
    <property type="evidence" value="ECO:0007669"/>
    <property type="project" value="Ensembl"/>
</dbReference>
<dbReference type="GO" id="GO:0045893">
    <property type="term" value="P:positive regulation of DNA-templated transcription"/>
    <property type="evidence" value="ECO:0000314"/>
    <property type="project" value="UniProtKB"/>
</dbReference>
<dbReference type="GO" id="GO:0045931">
    <property type="term" value="P:positive regulation of mitotic cell cycle"/>
    <property type="evidence" value="ECO:0007669"/>
    <property type="project" value="Ensembl"/>
</dbReference>
<dbReference type="GO" id="GO:0032465">
    <property type="term" value="P:regulation of cytokinesis"/>
    <property type="evidence" value="ECO:0007669"/>
    <property type="project" value="Ensembl"/>
</dbReference>
<dbReference type="GO" id="GO:2000001">
    <property type="term" value="P:regulation of DNA damage checkpoint"/>
    <property type="evidence" value="ECO:0000303"/>
    <property type="project" value="ComplexPortal"/>
</dbReference>
<dbReference type="GO" id="GO:0006355">
    <property type="term" value="P:regulation of DNA-templated transcription"/>
    <property type="evidence" value="ECO:0000318"/>
    <property type="project" value="GO_Central"/>
</dbReference>
<dbReference type="GO" id="GO:0010332">
    <property type="term" value="P:response to gamma radiation"/>
    <property type="evidence" value="ECO:0007669"/>
    <property type="project" value="Ensembl"/>
</dbReference>
<dbReference type="GO" id="GO:0010225">
    <property type="term" value="P:response to UV-C"/>
    <property type="evidence" value="ECO:0007669"/>
    <property type="project" value="Ensembl"/>
</dbReference>
<dbReference type="GO" id="GO:0010165">
    <property type="term" value="P:response to X-ray"/>
    <property type="evidence" value="ECO:0007669"/>
    <property type="project" value="Ensembl"/>
</dbReference>
<dbReference type="GO" id="GO:0007283">
    <property type="term" value="P:spermatogenesis"/>
    <property type="evidence" value="ECO:0007669"/>
    <property type="project" value="Ensembl"/>
</dbReference>
<dbReference type="GO" id="GO:0000722">
    <property type="term" value="P:telomere maintenance via recombination"/>
    <property type="evidence" value="ECO:0007669"/>
    <property type="project" value="Ensembl"/>
</dbReference>
<dbReference type="CDD" id="cd04493">
    <property type="entry name" value="BRCA2DBD_OB1"/>
    <property type="match status" value="1"/>
</dbReference>
<dbReference type="CDD" id="cd04494">
    <property type="entry name" value="BRCA2DBD_OB2"/>
    <property type="match status" value="1"/>
</dbReference>
<dbReference type="CDD" id="cd04495">
    <property type="entry name" value="BRCA2DBD_OB3"/>
    <property type="match status" value="1"/>
</dbReference>
<dbReference type="FunFam" id="2.40.50.140:FF:000205">
    <property type="entry name" value="Breast cancer susceptibility protein 2"/>
    <property type="match status" value="1"/>
</dbReference>
<dbReference type="FunFam" id="2.40.50.140:FF:000211">
    <property type="entry name" value="breast cancer type 2 susceptibility protein"/>
    <property type="match status" value="1"/>
</dbReference>
<dbReference type="Gene3D" id="6.10.70.10">
    <property type="match status" value="1"/>
</dbReference>
<dbReference type="Gene3D" id="2.40.50.140">
    <property type="entry name" value="Nucleic acid-binding proteins"/>
    <property type="match status" value="3"/>
</dbReference>
<dbReference type="IDEAL" id="IID00237"/>
<dbReference type="InterPro" id="IPR015525">
    <property type="entry name" value="BRCA2"/>
</dbReference>
<dbReference type="InterPro" id="IPR015252">
    <property type="entry name" value="BRCA2_hlx"/>
</dbReference>
<dbReference type="InterPro" id="IPR036315">
    <property type="entry name" value="BRCA2_hlx_sf"/>
</dbReference>
<dbReference type="InterPro" id="IPR015187">
    <property type="entry name" value="BRCA2_OB_1"/>
</dbReference>
<dbReference type="InterPro" id="IPR048262">
    <property type="entry name" value="BRCA2_OB_2_dom"/>
</dbReference>
<dbReference type="InterPro" id="IPR015188">
    <property type="entry name" value="BRCA2_OB_3"/>
</dbReference>
<dbReference type="InterPro" id="IPR002093">
    <property type="entry name" value="BRCA2_repeat"/>
</dbReference>
<dbReference type="InterPro" id="IPR055077">
    <property type="entry name" value="BRCA2_TR2"/>
</dbReference>
<dbReference type="InterPro" id="IPR012340">
    <property type="entry name" value="NA-bd_OB-fold"/>
</dbReference>
<dbReference type="InterPro" id="IPR015205">
    <property type="entry name" value="Tower_dom"/>
</dbReference>
<dbReference type="PANTHER" id="PTHR11289:SF0">
    <property type="entry name" value="BREAST CANCER TYPE 2 SUSCEPTIBILITY PROTEIN"/>
    <property type="match status" value="1"/>
</dbReference>
<dbReference type="PANTHER" id="PTHR11289">
    <property type="entry name" value="BREAST CANCER TYPE 2 SUSCEPTIBILITY PROTEIN BRCA2"/>
    <property type="match status" value="1"/>
</dbReference>
<dbReference type="Pfam" id="PF09169">
    <property type="entry name" value="BRCA-2_helical"/>
    <property type="match status" value="1"/>
</dbReference>
<dbReference type="Pfam" id="PF09103">
    <property type="entry name" value="BRCA-2_OB1"/>
    <property type="match status" value="1"/>
</dbReference>
<dbReference type="Pfam" id="PF09104">
    <property type="entry name" value="BRCA-2_OB3"/>
    <property type="match status" value="1"/>
</dbReference>
<dbReference type="Pfam" id="PF00634">
    <property type="entry name" value="BRCA2"/>
    <property type="match status" value="7"/>
</dbReference>
<dbReference type="Pfam" id="PF22687">
    <property type="entry name" value="BRCA2_TR2"/>
    <property type="match status" value="1"/>
</dbReference>
<dbReference type="Pfam" id="PF21318">
    <property type="entry name" value="BRCA2DBD_OB2"/>
    <property type="match status" value="1"/>
</dbReference>
<dbReference type="Pfam" id="PF09121">
    <property type="entry name" value="Tower"/>
    <property type="match status" value="1"/>
</dbReference>
<dbReference type="PIRSF" id="PIRSF002397">
    <property type="entry name" value="BRCA2"/>
    <property type="match status" value="1"/>
</dbReference>
<dbReference type="SMART" id="SM01341">
    <property type="entry name" value="Tower"/>
    <property type="match status" value="1"/>
</dbReference>
<dbReference type="SUPFAM" id="SSF81872">
    <property type="entry name" value="BRCA2 helical domain"/>
    <property type="match status" value="1"/>
</dbReference>
<dbReference type="SUPFAM" id="SSF81878">
    <property type="entry name" value="BRCA2 tower domain"/>
    <property type="match status" value="1"/>
</dbReference>
<dbReference type="SUPFAM" id="SSF50249">
    <property type="entry name" value="Nucleic acid-binding proteins"/>
    <property type="match status" value="3"/>
</dbReference>
<dbReference type="PROSITE" id="PS50138">
    <property type="entry name" value="BRCA2_REPEAT"/>
    <property type="match status" value="8"/>
</dbReference>